<sequence>METVQLRNPPRRQLKKLDEDSLTKQPEEVFDVLEKLGEGSYGSVYKAIHKETGQIVAIKQVPVESDLQEIIKEISIMQQCDSPHVVKYYGSYFKNTDLWIVMEYCGAGSVSDIIRLRNKTLTEDEIATILQSTLKGLEYLHFMRKIHRDIKAGNILLNTEGHAKLADFGVAGQLTDTMAKRNTVIGTPFWMAPEVIQEIGYNCVADIWSLGITAIEMAEGKPPYADIHPMRAIFMIPTNPPPTFRKPELWSDNFTDFVKQCLVKSPEQRATATQLLQHPFVRSAKGVSILRDLINEAMDVKLKRQESQQREVDQDDEENSEEDEMDSGTMVRAVGDEMGTVRVASTMTDGANTMIEHDDTLPSQLGTMVINAEDEEEEGTMKRRDETMQPAKPSFLEYFEQKEKENQINSFGKSVPGPLKNSSDWKIPQDGDYEFLKSWTVEDLQKRLLALDPMMEQEIEEIRQKYQSKRQPILDAIEAKKRRQQNF</sequence>
<protein>
    <recommendedName>
        <fullName>Serine/threonine-protein kinase 4</fullName>
        <ecNumber evidence="17">2.7.11.1</ecNumber>
    </recommendedName>
    <alternativeName>
        <fullName>Mammalian STE20-like protein kinase 1</fullName>
        <shortName>MST-1</shortName>
    </alternativeName>
    <alternativeName>
        <fullName>STE20-like kinase MST1</fullName>
    </alternativeName>
    <alternativeName>
        <fullName>Serine/threonine-protein kinase Krs-2</fullName>
    </alternativeName>
    <component>
        <recommendedName>
            <fullName>Serine/threonine-protein kinase 4 37kDa subunit</fullName>
            <shortName>MST1/N</shortName>
        </recommendedName>
    </component>
    <component>
        <recommendedName>
            <fullName>Serine/threonine-protein kinase 4 18kDa subunit</fullName>
            <shortName>MST1/C</shortName>
        </recommendedName>
    </component>
</protein>
<feature type="chain" id="PRO_0000086691" description="Serine/threonine-protein kinase 4">
    <location>
        <begin position="1"/>
        <end position="487"/>
    </location>
</feature>
<feature type="chain" id="PRO_0000413735" description="Serine/threonine-protein kinase 4 37kDa subunit">
    <location>
        <begin position="1"/>
        <end position="326"/>
    </location>
</feature>
<feature type="chain" id="PRO_0000413736" description="Serine/threonine-protein kinase 4 18kDa subunit">
    <location>
        <begin position="327"/>
        <end position="487"/>
    </location>
</feature>
<feature type="domain" description="Protein kinase" evidence="4">
    <location>
        <begin position="30"/>
        <end position="281"/>
    </location>
</feature>
<feature type="domain" description="SARAH" evidence="5">
    <location>
        <begin position="433"/>
        <end position="480"/>
    </location>
</feature>
<feature type="region of interest" description="Disordered" evidence="6">
    <location>
        <begin position="303"/>
        <end position="332"/>
    </location>
</feature>
<feature type="coiled-coil region" evidence="3">
    <location>
        <begin position="290"/>
        <end position="310"/>
    </location>
</feature>
<feature type="compositionally biased region" description="Basic and acidic residues" evidence="6">
    <location>
        <begin position="303"/>
        <end position="312"/>
    </location>
</feature>
<feature type="compositionally biased region" description="Acidic residues" evidence="6">
    <location>
        <begin position="313"/>
        <end position="326"/>
    </location>
</feature>
<feature type="active site" description="Proton acceptor" evidence="4">
    <location>
        <position position="149"/>
    </location>
</feature>
<feature type="binding site" evidence="4">
    <location>
        <begin position="36"/>
        <end position="44"/>
    </location>
    <ligand>
        <name>ATP</name>
        <dbReference type="ChEBI" id="CHEBI:30616"/>
    </ligand>
</feature>
<feature type="binding site">
    <location>
        <position position="59"/>
    </location>
    <ligand>
        <name>ATP</name>
        <dbReference type="ChEBI" id="CHEBI:30616"/>
    </ligand>
</feature>
<feature type="site" description="Cleavage; by caspase-3">
    <location>
        <begin position="326"/>
        <end position="327"/>
    </location>
</feature>
<feature type="site" description="Cleavage; by caspase-3">
    <location>
        <begin position="349"/>
        <end position="350"/>
    </location>
</feature>
<feature type="modified residue" description="N-acetylmethionine" evidence="31 39 43 44">
    <location>
        <position position="1"/>
    </location>
</feature>
<feature type="modified residue" description="Phosphothreonine" evidence="39">
    <location>
        <position position="3"/>
    </location>
</feature>
<feature type="modified residue" description="Phosphothreonine; by autocatalysis" evidence="10">
    <location>
        <position position="183"/>
    </location>
</feature>
<feature type="modified residue" description="Phosphoserine" evidence="38">
    <location>
        <position position="265"/>
    </location>
</feature>
<feature type="modified residue" description="Phosphoserine" evidence="37 38 39 40 41 42 46">
    <location>
        <position position="320"/>
    </location>
</feature>
<feature type="modified residue" description="Phosphothreonine" evidence="38 39 45">
    <location>
        <position position="340"/>
    </location>
</feature>
<feature type="modified residue" description="Phosphothreonine" evidence="39">
    <location>
        <position position="367"/>
    </location>
</feature>
<feature type="modified residue" description="Phosphothreonine; by PKB/AKT1" evidence="15 45">
    <location>
        <position position="387"/>
    </location>
</feature>
<feature type="modified residue" description="Phosphoserine" evidence="39 45">
    <location>
        <position position="410"/>
    </location>
</feature>
<feature type="modified residue" description="Phosphoserine" evidence="39 45">
    <location>
        <position position="414"/>
    </location>
</feature>
<feature type="modified residue" description="Phosphotyrosine" evidence="2">
    <location>
        <position position="433"/>
    </location>
</feature>
<feature type="splice variant" id="VSP_019851" description="In isoform 2." evidence="34">
    <original>LKSWTVEDLQKRLLALDPMMEQEIEEI</original>
    <variation>KTSQEQQSGKDICIQNCQGNLLCRYAF</variation>
    <location>
        <begin position="436"/>
        <end position="462"/>
    </location>
</feature>
<feature type="splice variant" id="VSP_019852" description="In isoform 2." evidence="34">
    <location>
        <begin position="463"/>
        <end position="487"/>
    </location>
</feature>
<feature type="sequence variant" id="VAR_041123" description="In dbSNP:rs55850759." evidence="14">
    <original>H</original>
    <variation>N</variation>
    <location>
        <position position="162"/>
    </location>
</feature>
<feature type="sequence variant" id="VAR_041124" description="In dbSNP:rs35447878." evidence="14">
    <original>R</original>
    <variation>Q</variation>
    <location>
        <position position="310"/>
    </location>
</feature>
<feature type="sequence variant" id="VAR_027040" description="In dbSNP:rs17420378." evidence="14 28">
    <original>V</original>
    <variation>M</variation>
    <location>
        <position position="312"/>
    </location>
</feature>
<feature type="sequence variant" id="VAR_041125" description="In dbSNP:rs35944046." evidence="14">
    <original>I</original>
    <variation>T</variation>
    <location>
        <position position="355"/>
    </location>
</feature>
<feature type="sequence variant" id="VAR_041126" description="In dbSNP:rs33963346." evidence="14">
    <original>P</original>
    <variation>L</variation>
    <location>
        <position position="416"/>
    </location>
</feature>
<feature type="mutagenesis site" description="Loss of activity." evidence="10 13">
    <original>K</original>
    <variation>R</variation>
    <location>
        <position position="59"/>
    </location>
</feature>
<feature type="mutagenesis site" description="No effect on activity." evidence="10">
    <original>T</original>
    <variation>A</variation>
    <location>
        <position position="175"/>
    </location>
</feature>
<feature type="mutagenesis site" description="No effect on activity." evidence="10">
    <original>T</original>
    <variation>A</variation>
    <location>
        <position position="177"/>
    </location>
</feature>
<feature type="mutagenesis site" description="Loss of activity." evidence="10">
    <original>T</original>
    <variation>A</variation>
    <location>
        <position position="183"/>
    </location>
</feature>
<feature type="mutagenesis site" description="Resistant to proteolytic cleavage by caspase during apoptosis; when associated with N-349." evidence="7">
    <original>D</original>
    <variation>N</variation>
    <location>
        <position position="326"/>
    </location>
</feature>
<feature type="mutagenesis site" description="Resistant to proteolytic cleavage by caspase during apoptosis; when associated with N-326." evidence="7">
    <original>D</original>
    <variation>N</variation>
    <location>
        <position position="349"/>
    </location>
</feature>
<feature type="mutagenesis site" description="Loss of homodimerization, activation, and autophosphorylation." evidence="10">
    <original>L</original>
    <variation>P</variation>
    <location>
        <position position="444"/>
    </location>
</feature>
<feature type="sequence conflict" description="In Ref. 1; AAA83254." evidence="34" ref="1">
    <original>P</original>
    <variation>R</variation>
    <location>
        <position position="222"/>
    </location>
</feature>
<feature type="helix" evidence="49">
    <location>
        <begin position="19"/>
        <end position="22"/>
    </location>
</feature>
<feature type="helix" evidence="49">
    <location>
        <begin position="26"/>
        <end position="29"/>
    </location>
</feature>
<feature type="strand" evidence="49">
    <location>
        <begin position="30"/>
        <end position="37"/>
    </location>
</feature>
<feature type="strand" evidence="49">
    <location>
        <begin position="43"/>
        <end position="49"/>
    </location>
</feature>
<feature type="turn" evidence="49">
    <location>
        <begin position="50"/>
        <end position="52"/>
    </location>
</feature>
<feature type="strand" evidence="49">
    <location>
        <begin position="55"/>
        <end position="62"/>
    </location>
</feature>
<feature type="helix" evidence="49">
    <location>
        <begin position="68"/>
        <end position="79"/>
    </location>
</feature>
<feature type="strand" evidence="49">
    <location>
        <begin position="88"/>
        <end position="94"/>
    </location>
</feature>
<feature type="strand" evidence="49">
    <location>
        <begin position="97"/>
        <end position="103"/>
    </location>
</feature>
<feature type="helix" evidence="49">
    <location>
        <begin position="110"/>
        <end position="117"/>
    </location>
</feature>
<feature type="helix" evidence="49">
    <location>
        <begin position="123"/>
        <end position="142"/>
    </location>
</feature>
<feature type="helix" evidence="49">
    <location>
        <begin position="152"/>
        <end position="154"/>
    </location>
</feature>
<feature type="strand" evidence="49">
    <location>
        <begin position="155"/>
        <end position="157"/>
    </location>
</feature>
<feature type="strand" evidence="49">
    <location>
        <begin position="163"/>
        <end position="165"/>
    </location>
</feature>
<feature type="strand" evidence="48">
    <location>
        <begin position="179"/>
        <end position="181"/>
    </location>
</feature>
<feature type="helix" evidence="49">
    <location>
        <begin position="188"/>
        <end position="190"/>
    </location>
</feature>
<feature type="helix" evidence="49">
    <location>
        <begin position="193"/>
        <end position="196"/>
    </location>
</feature>
<feature type="strand" evidence="49">
    <location>
        <begin position="197"/>
        <end position="199"/>
    </location>
</feature>
<feature type="helix" evidence="49">
    <location>
        <begin position="205"/>
        <end position="219"/>
    </location>
</feature>
<feature type="turn" evidence="49">
    <location>
        <begin position="223"/>
        <end position="226"/>
    </location>
</feature>
<feature type="helix" evidence="49">
    <location>
        <begin position="229"/>
        <end position="235"/>
    </location>
</feature>
<feature type="turn" evidence="49">
    <location>
        <begin position="236"/>
        <end position="238"/>
    </location>
</feature>
<feature type="helix" evidence="49">
    <location>
        <begin position="247"/>
        <end position="249"/>
    </location>
</feature>
<feature type="helix" evidence="49">
    <location>
        <begin position="252"/>
        <end position="261"/>
    </location>
</feature>
<feature type="turn" evidence="49">
    <location>
        <begin position="266"/>
        <end position="268"/>
    </location>
</feature>
<feature type="helix" evidence="49">
    <location>
        <begin position="272"/>
        <end position="276"/>
    </location>
</feature>
<feature type="helix" evidence="49">
    <location>
        <begin position="279"/>
        <end position="282"/>
    </location>
</feature>
<feature type="helix" evidence="49">
    <location>
        <begin position="287"/>
        <end position="290"/>
    </location>
</feature>
<feature type="helix" evidence="49">
    <location>
        <begin position="291"/>
        <end position="297"/>
    </location>
</feature>
<feature type="helix" evidence="47">
    <location>
        <begin position="433"/>
        <end position="436"/>
    </location>
</feature>
<feature type="helix" evidence="47">
    <location>
        <begin position="441"/>
        <end position="478"/>
    </location>
</feature>
<dbReference type="EC" id="2.7.11.1" evidence="17"/>
<dbReference type="EMBL" id="U18297">
    <property type="protein sequence ID" value="AAA83254.1"/>
    <property type="molecule type" value="mRNA"/>
</dbReference>
<dbReference type="EMBL" id="U60207">
    <property type="protein sequence ID" value="AAB17262.1"/>
    <property type="molecule type" value="mRNA"/>
</dbReference>
<dbReference type="EMBL" id="AK315238">
    <property type="protein sequence ID" value="BAG37665.1"/>
    <property type="molecule type" value="mRNA"/>
</dbReference>
<dbReference type="EMBL" id="Z93016">
    <property type="status" value="NOT_ANNOTATED_CDS"/>
    <property type="molecule type" value="Genomic_DNA"/>
</dbReference>
<dbReference type="EMBL" id="AL109839">
    <property type="status" value="NOT_ANNOTATED_CDS"/>
    <property type="molecule type" value="Genomic_DNA"/>
</dbReference>
<dbReference type="EMBL" id="CH471077">
    <property type="protein sequence ID" value="EAW75882.1"/>
    <property type="molecule type" value="Genomic_DNA"/>
</dbReference>
<dbReference type="EMBL" id="BC029511">
    <property type="protein sequence ID" value="AAH29511.1"/>
    <property type="status" value="ALT_SEQ"/>
    <property type="molecule type" value="mRNA"/>
</dbReference>
<dbReference type="EMBL" id="BC058916">
    <property type="protein sequence ID" value="AAH58916.1"/>
    <property type="status" value="ALT_SEQ"/>
    <property type="molecule type" value="mRNA"/>
</dbReference>
<dbReference type="EMBL" id="BC093768">
    <property type="protein sequence ID" value="AAH93768.1"/>
    <property type="molecule type" value="mRNA"/>
</dbReference>
<dbReference type="CCDS" id="CCDS13341.1">
    <molecule id="Q13043-1"/>
</dbReference>
<dbReference type="CCDS" id="CCDS86957.1">
    <molecule id="Q13043-2"/>
</dbReference>
<dbReference type="RefSeq" id="NP_001339314.1">
    <molecule id="Q13043-2"/>
    <property type="nucleotide sequence ID" value="NM_001352385.2"/>
</dbReference>
<dbReference type="RefSeq" id="NP_006273.1">
    <molecule id="Q13043-1"/>
    <property type="nucleotide sequence ID" value="NM_006282.5"/>
</dbReference>
<dbReference type="RefSeq" id="XP_005260590.1">
    <property type="nucleotide sequence ID" value="XM_005260533.2"/>
</dbReference>
<dbReference type="PDB" id="2JO8">
    <property type="method" value="NMR"/>
    <property type="chains" value="A/B=432-480"/>
</dbReference>
<dbReference type="PDB" id="3COM">
    <property type="method" value="X-ray"/>
    <property type="resolution" value="2.20 A"/>
    <property type="chains" value="A/B=2-311"/>
</dbReference>
<dbReference type="PDB" id="4NR2">
    <property type="method" value="X-ray"/>
    <property type="resolution" value="2.00 A"/>
    <property type="chains" value="A/B/C/D/E/F/G/H=432-480"/>
</dbReference>
<dbReference type="PDB" id="4OH8">
    <property type="method" value="X-ray"/>
    <property type="resolution" value="2.28 A"/>
    <property type="chains" value="A=432-480"/>
</dbReference>
<dbReference type="PDB" id="5TWG">
    <property type="method" value="X-ray"/>
    <property type="resolution" value="2.30 A"/>
    <property type="chains" value="E=343-356"/>
</dbReference>
<dbReference type="PDB" id="5TWH">
    <property type="method" value="X-ray"/>
    <property type="resolution" value="2.50 A"/>
    <property type="chains" value="E=358-374"/>
</dbReference>
<dbReference type="PDB" id="6YAT">
    <property type="method" value="X-ray"/>
    <property type="resolution" value="2.58 A"/>
    <property type="chains" value="A/B=1-311"/>
</dbReference>
<dbReference type="PDB" id="8A5J">
    <property type="method" value="X-ray"/>
    <property type="resolution" value="2.12 A"/>
    <property type="chains" value="A/B=28-309"/>
</dbReference>
<dbReference type="PDB" id="8PAV">
    <property type="method" value="X-ray"/>
    <property type="resolution" value="1.90 A"/>
    <property type="chains" value="A/B=1-311"/>
</dbReference>
<dbReference type="PDB" id="8PAW">
    <property type="method" value="X-ray"/>
    <property type="resolution" value="2.14 A"/>
    <property type="chains" value="A/B=1-311"/>
</dbReference>
<dbReference type="PDBsum" id="2JO8"/>
<dbReference type="PDBsum" id="3COM"/>
<dbReference type="PDBsum" id="4NR2"/>
<dbReference type="PDBsum" id="4OH8"/>
<dbReference type="PDBsum" id="5TWG"/>
<dbReference type="PDBsum" id="5TWH"/>
<dbReference type="PDBsum" id="6YAT"/>
<dbReference type="PDBsum" id="8A5J"/>
<dbReference type="PDBsum" id="8PAV"/>
<dbReference type="PDBsum" id="8PAW"/>
<dbReference type="SMR" id="Q13043"/>
<dbReference type="BioGRID" id="112665">
    <property type="interactions" value="162"/>
</dbReference>
<dbReference type="CORUM" id="Q13043"/>
<dbReference type="DIP" id="DIP-32491N"/>
<dbReference type="ELM" id="Q13043"/>
<dbReference type="FunCoup" id="Q13043">
    <property type="interactions" value="4498"/>
</dbReference>
<dbReference type="IntAct" id="Q13043">
    <property type="interactions" value="215"/>
</dbReference>
<dbReference type="MINT" id="Q13043"/>
<dbReference type="STRING" id="9606.ENSP00000361892"/>
<dbReference type="BindingDB" id="Q13043"/>
<dbReference type="ChEMBL" id="CHEMBL4598"/>
<dbReference type="DrugCentral" id="Q13043"/>
<dbReference type="GuidetoPHARMACOLOGY" id="2225"/>
<dbReference type="GlyGen" id="Q13043">
    <property type="glycosylation" value="2 sites, 1 N-linked glycan (1 site), 1 O-linked glycan (1 site)"/>
</dbReference>
<dbReference type="iPTMnet" id="Q13043"/>
<dbReference type="MetOSite" id="Q13043"/>
<dbReference type="PhosphoSitePlus" id="Q13043"/>
<dbReference type="BioMuta" id="STK4"/>
<dbReference type="DMDM" id="13124559"/>
<dbReference type="jPOST" id="Q13043"/>
<dbReference type="MassIVE" id="Q13043"/>
<dbReference type="PaxDb" id="9606-ENSP00000361892"/>
<dbReference type="PeptideAtlas" id="Q13043"/>
<dbReference type="ProteomicsDB" id="59119">
    <molecule id="Q13043-1"/>
</dbReference>
<dbReference type="ProteomicsDB" id="59120">
    <molecule id="Q13043-2"/>
</dbReference>
<dbReference type="Pumba" id="Q13043"/>
<dbReference type="Antibodypedia" id="3325">
    <property type="antibodies" value="485 antibodies from 42 providers"/>
</dbReference>
<dbReference type="DNASU" id="6789"/>
<dbReference type="Ensembl" id="ENST00000372801.5">
    <molecule id="Q13043-2"/>
    <property type="protein sequence ID" value="ENSP00000361887.1"/>
    <property type="gene ID" value="ENSG00000101109.14"/>
</dbReference>
<dbReference type="Ensembl" id="ENST00000372806.8">
    <molecule id="Q13043-1"/>
    <property type="protein sequence ID" value="ENSP00000361892.3"/>
    <property type="gene ID" value="ENSG00000101109.14"/>
</dbReference>
<dbReference type="GeneID" id="6789"/>
<dbReference type="KEGG" id="hsa:6789"/>
<dbReference type="MANE-Select" id="ENST00000372806.8">
    <property type="protein sequence ID" value="ENSP00000361892.3"/>
    <property type="RefSeq nucleotide sequence ID" value="NM_006282.5"/>
    <property type="RefSeq protein sequence ID" value="NP_006273.1"/>
</dbReference>
<dbReference type="UCSC" id="uc002xnb.4">
    <molecule id="Q13043-1"/>
    <property type="organism name" value="human"/>
</dbReference>
<dbReference type="AGR" id="HGNC:11408"/>
<dbReference type="CTD" id="6789"/>
<dbReference type="DisGeNET" id="6789"/>
<dbReference type="GeneCards" id="STK4"/>
<dbReference type="HGNC" id="HGNC:11408">
    <property type="gene designation" value="STK4"/>
</dbReference>
<dbReference type="HPA" id="ENSG00000101109">
    <property type="expression patterns" value="Tissue enhanced (bone marrow, lymphoid tissue)"/>
</dbReference>
<dbReference type="MalaCards" id="STK4"/>
<dbReference type="MIM" id="604965">
    <property type="type" value="gene"/>
</dbReference>
<dbReference type="MIM" id="614868">
    <property type="type" value="phenotype"/>
</dbReference>
<dbReference type="neXtProt" id="NX_Q13043"/>
<dbReference type="OpenTargets" id="ENSG00000101109"/>
<dbReference type="Orphanet" id="314689">
    <property type="disease" value="Combined immunodeficiency due to STK4 deficiency"/>
</dbReference>
<dbReference type="PharmGKB" id="PA36215"/>
<dbReference type="VEuPathDB" id="HostDB:ENSG00000101109"/>
<dbReference type="eggNOG" id="KOG0574">
    <property type="taxonomic scope" value="Eukaryota"/>
</dbReference>
<dbReference type="GeneTree" id="ENSGT00940000159787"/>
<dbReference type="InParanoid" id="Q13043"/>
<dbReference type="OMA" id="CDAMKIT"/>
<dbReference type="OrthoDB" id="8693905at2759"/>
<dbReference type="PAN-GO" id="Q13043">
    <property type="GO annotations" value="5 GO annotations based on evolutionary models"/>
</dbReference>
<dbReference type="PhylomeDB" id="Q13043"/>
<dbReference type="TreeFam" id="TF354217"/>
<dbReference type="BRENDA" id="2.7.11.1">
    <property type="organism ID" value="2681"/>
</dbReference>
<dbReference type="PathwayCommons" id="Q13043"/>
<dbReference type="Reactome" id="R-HSA-2028269">
    <property type="pathway name" value="Signaling by Hippo"/>
</dbReference>
<dbReference type="SignaLink" id="Q13043"/>
<dbReference type="SIGNOR" id="Q13043"/>
<dbReference type="BioGRID-ORCS" id="6789">
    <property type="hits" value="14 hits in 1192 CRISPR screens"/>
</dbReference>
<dbReference type="ChiTaRS" id="STK4">
    <property type="organism name" value="human"/>
</dbReference>
<dbReference type="EvolutionaryTrace" id="Q13043"/>
<dbReference type="GeneWiki" id="STK4"/>
<dbReference type="GenomeRNAi" id="6789"/>
<dbReference type="Pharos" id="Q13043">
    <property type="development level" value="Tchem"/>
</dbReference>
<dbReference type="PRO" id="PR:Q13043"/>
<dbReference type="Proteomes" id="UP000005640">
    <property type="component" value="Chromosome 20"/>
</dbReference>
<dbReference type="RNAct" id="Q13043">
    <property type="molecule type" value="protein"/>
</dbReference>
<dbReference type="Bgee" id="ENSG00000101109">
    <property type="expression patterns" value="Expressed in colonic epithelium and 190 other cell types or tissues"/>
</dbReference>
<dbReference type="ExpressionAtlas" id="Q13043">
    <property type="expression patterns" value="baseline and differential"/>
</dbReference>
<dbReference type="GO" id="GO:0005737">
    <property type="term" value="C:cytoplasm"/>
    <property type="evidence" value="ECO:0000314"/>
    <property type="project" value="UniProtKB"/>
</dbReference>
<dbReference type="GO" id="GO:0005829">
    <property type="term" value="C:cytosol"/>
    <property type="evidence" value="ECO:0000314"/>
    <property type="project" value="HPA"/>
</dbReference>
<dbReference type="GO" id="GO:0016604">
    <property type="term" value="C:nuclear body"/>
    <property type="evidence" value="ECO:0000314"/>
    <property type="project" value="HPA"/>
</dbReference>
<dbReference type="GO" id="GO:0005654">
    <property type="term" value="C:nucleoplasm"/>
    <property type="evidence" value="ECO:0000314"/>
    <property type="project" value="HPA"/>
</dbReference>
<dbReference type="GO" id="GO:0005634">
    <property type="term" value="C:nucleus"/>
    <property type="evidence" value="ECO:0000314"/>
    <property type="project" value="UniProtKB"/>
</dbReference>
<dbReference type="GO" id="GO:0032991">
    <property type="term" value="C:protein-containing complex"/>
    <property type="evidence" value="ECO:0000314"/>
    <property type="project" value="MGI"/>
</dbReference>
<dbReference type="GO" id="GO:0005524">
    <property type="term" value="F:ATP binding"/>
    <property type="evidence" value="ECO:0000314"/>
    <property type="project" value="UniProtKB"/>
</dbReference>
<dbReference type="GO" id="GO:0042802">
    <property type="term" value="F:identical protein binding"/>
    <property type="evidence" value="ECO:0000353"/>
    <property type="project" value="IntAct"/>
</dbReference>
<dbReference type="GO" id="GO:0000287">
    <property type="term" value="F:magnesium ion binding"/>
    <property type="evidence" value="ECO:0000314"/>
    <property type="project" value="UniProtKB"/>
</dbReference>
<dbReference type="GO" id="GO:0042803">
    <property type="term" value="F:protein homodimerization activity"/>
    <property type="evidence" value="ECO:0000314"/>
    <property type="project" value="MGI"/>
</dbReference>
<dbReference type="GO" id="GO:0004672">
    <property type="term" value="F:protein kinase activity"/>
    <property type="evidence" value="ECO:0000316"/>
    <property type="project" value="MGI"/>
</dbReference>
<dbReference type="GO" id="GO:0106310">
    <property type="term" value="F:protein serine kinase activity"/>
    <property type="evidence" value="ECO:0007669"/>
    <property type="project" value="RHEA"/>
</dbReference>
<dbReference type="GO" id="GO:0043539">
    <property type="term" value="F:protein serine/threonine kinase activator activity"/>
    <property type="evidence" value="ECO:0000304"/>
    <property type="project" value="BHF-UCL"/>
</dbReference>
<dbReference type="GO" id="GO:0004674">
    <property type="term" value="F:protein serine/threonine kinase activity"/>
    <property type="evidence" value="ECO:0000314"/>
    <property type="project" value="UniProtKB"/>
</dbReference>
<dbReference type="GO" id="GO:0061629">
    <property type="term" value="F:RNA polymerase II-specific DNA-binding transcription factor binding"/>
    <property type="evidence" value="ECO:0000353"/>
    <property type="project" value="UniProtKB"/>
</dbReference>
<dbReference type="GO" id="GO:0006915">
    <property type="term" value="P:apoptotic process"/>
    <property type="evidence" value="ECO:0000314"/>
    <property type="project" value="UniProtKB"/>
</dbReference>
<dbReference type="GO" id="GO:0001569">
    <property type="term" value="P:branching involved in blood vessel morphogenesis"/>
    <property type="evidence" value="ECO:0007669"/>
    <property type="project" value="Ensembl"/>
</dbReference>
<dbReference type="GO" id="GO:0060070">
    <property type="term" value="P:canonical Wnt signaling pathway"/>
    <property type="evidence" value="ECO:0007669"/>
    <property type="project" value="Ensembl"/>
</dbReference>
<dbReference type="GO" id="GO:0060706">
    <property type="term" value="P:cell differentiation involved in embryonic placenta development"/>
    <property type="evidence" value="ECO:0007669"/>
    <property type="project" value="Ensembl"/>
</dbReference>
<dbReference type="GO" id="GO:0000902">
    <property type="term" value="P:cell morphogenesis"/>
    <property type="evidence" value="ECO:0000314"/>
    <property type="project" value="MGI"/>
</dbReference>
<dbReference type="GO" id="GO:0007417">
    <property type="term" value="P:central nervous system development"/>
    <property type="evidence" value="ECO:0007669"/>
    <property type="project" value="Ensembl"/>
</dbReference>
<dbReference type="GO" id="GO:0003157">
    <property type="term" value="P:endocardium development"/>
    <property type="evidence" value="ECO:0007669"/>
    <property type="project" value="Ensembl"/>
</dbReference>
<dbReference type="GO" id="GO:0050673">
    <property type="term" value="P:epithelial cell proliferation"/>
    <property type="evidence" value="ECO:0007669"/>
    <property type="project" value="Ensembl"/>
</dbReference>
<dbReference type="GO" id="GO:0008625">
    <property type="term" value="P:extrinsic apoptotic signaling pathway via death domain receptors"/>
    <property type="evidence" value="ECO:0007669"/>
    <property type="project" value="Ensembl"/>
</dbReference>
<dbReference type="GO" id="GO:0097284">
    <property type="term" value="P:hepatocyte apoptotic process"/>
    <property type="evidence" value="ECO:0007669"/>
    <property type="project" value="Ensembl"/>
</dbReference>
<dbReference type="GO" id="GO:0035329">
    <property type="term" value="P:hippo signaling"/>
    <property type="evidence" value="ECO:0000314"/>
    <property type="project" value="BHF-UCL"/>
</dbReference>
<dbReference type="GO" id="GO:0035556">
    <property type="term" value="P:intracellular signal transduction"/>
    <property type="evidence" value="ECO:0000314"/>
    <property type="project" value="UniProtKB"/>
</dbReference>
<dbReference type="GO" id="GO:0030216">
    <property type="term" value="P:keratinocyte differentiation"/>
    <property type="evidence" value="ECO:0007669"/>
    <property type="project" value="Ensembl"/>
</dbReference>
<dbReference type="GO" id="GO:0090090">
    <property type="term" value="P:negative regulation of canonical Wnt signaling pathway"/>
    <property type="evidence" value="ECO:0000315"/>
    <property type="project" value="BHF-UCL"/>
</dbReference>
<dbReference type="GO" id="GO:0050680">
    <property type="term" value="P:negative regulation of epithelial cell proliferation"/>
    <property type="evidence" value="ECO:0007669"/>
    <property type="project" value="Ensembl"/>
</dbReference>
<dbReference type="GO" id="GO:0046621">
    <property type="term" value="P:negative regulation of organ growth"/>
    <property type="evidence" value="ECO:0007669"/>
    <property type="project" value="Ensembl"/>
</dbReference>
<dbReference type="GO" id="GO:0001841">
    <property type="term" value="P:neural tube formation"/>
    <property type="evidence" value="ECO:0007669"/>
    <property type="project" value="Ensembl"/>
</dbReference>
<dbReference type="GO" id="GO:0035265">
    <property type="term" value="P:organ growth"/>
    <property type="evidence" value="ECO:0007669"/>
    <property type="project" value="Ensembl"/>
</dbReference>
<dbReference type="GO" id="GO:0018105">
    <property type="term" value="P:peptidyl-serine phosphorylation"/>
    <property type="evidence" value="ECO:0000314"/>
    <property type="project" value="UniProtKB"/>
</dbReference>
<dbReference type="GO" id="GO:0043065">
    <property type="term" value="P:positive regulation of apoptotic process"/>
    <property type="evidence" value="ECO:0000314"/>
    <property type="project" value="UniProtKB"/>
</dbReference>
<dbReference type="GO" id="GO:1902043">
    <property type="term" value="P:positive regulation of extrinsic apoptotic signaling pathway via death domain receptors"/>
    <property type="evidence" value="ECO:0007669"/>
    <property type="project" value="Ensembl"/>
</dbReference>
<dbReference type="GO" id="GO:0045600">
    <property type="term" value="P:positive regulation of fat cell differentiation"/>
    <property type="evidence" value="ECO:0007669"/>
    <property type="project" value="Ensembl"/>
</dbReference>
<dbReference type="GO" id="GO:1903945">
    <property type="term" value="P:positive regulation of hepatocyte apoptotic process"/>
    <property type="evidence" value="ECO:0007669"/>
    <property type="project" value="Ensembl"/>
</dbReference>
<dbReference type="GO" id="GO:0035332">
    <property type="term" value="P:positive regulation of hippo signaling"/>
    <property type="evidence" value="ECO:0000314"/>
    <property type="project" value="MGI"/>
</dbReference>
<dbReference type="GO" id="GO:0033138">
    <property type="term" value="P:positive regulation of peptidyl-serine phosphorylation"/>
    <property type="evidence" value="ECO:0000314"/>
    <property type="project" value="MGI"/>
</dbReference>
<dbReference type="GO" id="GO:0001934">
    <property type="term" value="P:positive regulation of protein phosphorylation"/>
    <property type="evidence" value="ECO:0000314"/>
    <property type="project" value="MGI"/>
</dbReference>
<dbReference type="GO" id="GO:1904237">
    <property type="term" value="P:positive regulation of substrate-dependent cell migration, cell attachment to substrate"/>
    <property type="evidence" value="ECO:0007669"/>
    <property type="project" value="Ensembl"/>
</dbReference>
<dbReference type="GO" id="GO:0060215">
    <property type="term" value="P:primitive hemopoiesis"/>
    <property type="evidence" value="ECO:0007669"/>
    <property type="project" value="Ensembl"/>
</dbReference>
<dbReference type="GO" id="GO:0046777">
    <property type="term" value="P:protein autophosphorylation"/>
    <property type="evidence" value="ECO:0000314"/>
    <property type="project" value="MGI"/>
</dbReference>
<dbReference type="GO" id="GO:0006606">
    <property type="term" value="P:protein import into nucleus"/>
    <property type="evidence" value="ECO:0000314"/>
    <property type="project" value="UniProtKB"/>
</dbReference>
<dbReference type="GO" id="GO:0006468">
    <property type="term" value="P:protein phosphorylation"/>
    <property type="evidence" value="ECO:0000314"/>
    <property type="project" value="UniProtKB"/>
</dbReference>
<dbReference type="GO" id="GO:0050821">
    <property type="term" value="P:protein stabilization"/>
    <property type="evidence" value="ECO:0000314"/>
    <property type="project" value="MGI"/>
</dbReference>
<dbReference type="GO" id="GO:0051262">
    <property type="term" value="P:protein tetramerization"/>
    <property type="evidence" value="ECO:0007669"/>
    <property type="project" value="InterPro"/>
</dbReference>
<dbReference type="GO" id="GO:0060800">
    <property type="term" value="P:regulation of cell differentiation involved in embryonic placenta development"/>
    <property type="evidence" value="ECO:0007669"/>
    <property type="project" value="Ensembl"/>
</dbReference>
<dbReference type="GO" id="GO:0043408">
    <property type="term" value="P:regulation of MAPK cascade"/>
    <property type="evidence" value="ECO:0000318"/>
    <property type="project" value="GO_Central"/>
</dbReference>
<dbReference type="GO" id="GO:0007165">
    <property type="term" value="P:signal transduction"/>
    <property type="evidence" value="ECO:0000304"/>
    <property type="project" value="ProtInc"/>
</dbReference>
<dbReference type="CDD" id="cd21887">
    <property type="entry name" value="SARAH_MST1"/>
    <property type="match status" value="1"/>
</dbReference>
<dbReference type="CDD" id="cd06612">
    <property type="entry name" value="STKc_MST1_2"/>
    <property type="match status" value="1"/>
</dbReference>
<dbReference type="FunFam" id="1.10.510.10:FF:000075">
    <property type="entry name" value="Serine/threonine-protein kinase 3"/>
    <property type="match status" value="1"/>
</dbReference>
<dbReference type="FunFam" id="3.30.200.20:FF:000410">
    <property type="entry name" value="Serine/threonine-protein kinase 3"/>
    <property type="match status" value="1"/>
</dbReference>
<dbReference type="FunFam" id="4.10.170.10:FF:000002">
    <property type="entry name" value="serine/threonine-protein kinase 3"/>
    <property type="match status" value="1"/>
</dbReference>
<dbReference type="FunFam" id="1.10.287.4270:FF:000004">
    <property type="entry name" value="Serine/threonine-protein kinase 3/4"/>
    <property type="match status" value="1"/>
</dbReference>
<dbReference type="FunFam" id="1.10.287.4270:FF:000002">
    <property type="entry name" value="Serine/threonine-protein kinase 4"/>
    <property type="match status" value="1"/>
</dbReference>
<dbReference type="Gene3D" id="1.10.287.4270">
    <property type="match status" value="1"/>
</dbReference>
<dbReference type="Gene3D" id="4.10.170.10">
    <property type="entry name" value="p53-like tetramerisation domain"/>
    <property type="match status" value="1"/>
</dbReference>
<dbReference type="Gene3D" id="1.10.510.10">
    <property type="entry name" value="Transferase(Phosphotransferase) domain 1"/>
    <property type="match status" value="1"/>
</dbReference>
<dbReference type="IDEAL" id="IID00168"/>
<dbReference type="InterPro" id="IPR011009">
    <property type="entry name" value="Kinase-like_dom_sf"/>
</dbReference>
<dbReference type="InterPro" id="IPR024205">
    <property type="entry name" value="Mst1_2_SARAH_domain"/>
</dbReference>
<dbReference type="InterPro" id="IPR036674">
    <property type="entry name" value="p53_tetramer_sf"/>
</dbReference>
<dbReference type="InterPro" id="IPR000719">
    <property type="entry name" value="Prot_kinase_dom"/>
</dbReference>
<dbReference type="InterPro" id="IPR017441">
    <property type="entry name" value="Protein_kinase_ATP_BS"/>
</dbReference>
<dbReference type="InterPro" id="IPR011524">
    <property type="entry name" value="SARAH_dom"/>
</dbReference>
<dbReference type="InterPro" id="IPR050629">
    <property type="entry name" value="STE20/SPS1-PAK"/>
</dbReference>
<dbReference type="PANTHER" id="PTHR48012:SF2">
    <property type="entry name" value="STERILE20-LIKE KINASE, ISOFORM B"/>
    <property type="match status" value="1"/>
</dbReference>
<dbReference type="PANTHER" id="PTHR48012">
    <property type="entry name" value="STERILE20-LIKE KINASE, ISOFORM B-RELATED"/>
    <property type="match status" value="1"/>
</dbReference>
<dbReference type="Pfam" id="PF11629">
    <property type="entry name" value="Mst1_SARAH"/>
    <property type="match status" value="1"/>
</dbReference>
<dbReference type="Pfam" id="PF00069">
    <property type="entry name" value="Pkinase"/>
    <property type="match status" value="1"/>
</dbReference>
<dbReference type="SMART" id="SM00220">
    <property type="entry name" value="S_TKc"/>
    <property type="match status" value="1"/>
</dbReference>
<dbReference type="SUPFAM" id="SSF56112">
    <property type="entry name" value="Protein kinase-like (PK-like)"/>
    <property type="match status" value="1"/>
</dbReference>
<dbReference type="PROSITE" id="PS00107">
    <property type="entry name" value="PROTEIN_KINASE_ATP"/>
    <property type="match status" value="1"/>
</dbReference>
<dbReference type="PROSITE" id="PS50011">
    <property type="entry name" value="PROTEIN_KINASE_DOM"/>
    <property type="match status" value="1"/>
</dbReference>
<dbReference type="PROSITE" id="PS50951">
    <property type="entry name" value="SARAH"/>
    <property type="match status" value="1"/>
</dbReference>
<reference key="1">
    <citation type="journal article" date="1995" name="J. Biol. Chem.">
        <title>Cloning and characterization of a human protein kinase with homology to Ste20.</title>
        <authorList>
            <person name="Creasy C.L."/>
            <person name="Chernoff J."/>
        </authorList>
    </citation>
    <scope>NUCLEOTIDE SEQUENCE [MRNA] (ISOFORM 1)</scope>
    <scope>VARIANT MET-312</scope>
</reference>
<reference key="2">
    <citation type="journal article" date="1996" name="Proc. Natl. Acad. Sci. U.S.A.">
        <title>Newly identified stress-responsive protein kinases, Krs-1 and Krs-2.</title>
        <authorList>
            <person name="Taylor L.K."/>
            <person name="Wang H.C."/>
            <person name="Erikson R.L."/>
        </authorList>
    </citation>
    <scope>NUCLEOTIDE SEQUENCE [MRNA] (ISOFORM 1)</scope>
    <scope>FUNCTION</scope>
</reference>
<reference key="3">
    <citation type="journal article" date="2004" name="Nat. Genet.">
        <title>Complete sequencing and characterization of 21,243 full-length human cDNAs.</title>
        <authorList>
            <person name="Ota T."/>
            <person name="Suzuki Y."/>
            <person name="Nishikawa T."/>
            <person name="Otsuki T."/>
            <person name="Sugiyama T."/>
            <person name="Irie R."/>
            <person name="Wakamatsu A."/>
            <person name="Hayashi K."/>
            <person name="Sato H."/>
            <person name="Nagai K."/>
            <person name="Kimura K."/>
            <person name="Makita H."/>
            <person name="Sekine M."/>
            <person name="Obayashi M."/>
            <person name="Nishi T."/>
            <person name="Shibahara T."/>
            <person name="Tanaka T."/>
            <person name="Ishii S."/>
            <person name="Yamamoto J."/>
            <person name="Saito K."/>
            <person name="Kawai Y."/>
            <person name="Isono Y."/>
            <person name="Nakamura Y."/>
            <person name="Nagahari K."/>
            <person name="Murakami K."/>
            <person name="Yasuda T."/>
            <person name="Iwayanagi T."/>
            <person name="Wagatsuma M."/>
            <person name="Shiratori A."/>
            <person name="Sudo H."/>
            <person name="Hosoiri T."/>
            <person name="Kaku Y."/>
            <person name="Kodaira H."/>
            <person name="Kondo H."/>
            <person name="Sugawara M."/>
            <person name="Takahashi M."/>
            <person name="Kanda K."/>
            <person name="Yokoi T."/>
            <person name="Furuya T."/>
            <person name="Kikkawa E."/>
            <person name="Omura Y."/>
            <person name="Abe K."/>
            <person name="Kamihara K."/>
            <person name="Katsuta N."/>
            <person name="Sato K."/>
            <person name="Tanikawa M."/>
            <person name="Yamazaki M."/>
            <person name="Ninomiya K."/>
            <person name="Ishibashi T."/>
            <person name="Yamashita H."/>
            <person name="Murakawa K."/>
            <person name="Fujimori K."/>
            <person name="Tanai H."/>
            <person name="Kimata M."/>
            <person name="Watanabe M."/>
            <person name="Hiraoka S."/>
            <person name="Chiba Y."/>
            <person name="Ishida S."/>
            <person name="Ono Y."/>
            <person name="Takiguchi S."/>
            <person name="Watanabe S."/>
            <person name="Yosida M."/>
            <person name="Hotuta T."/>
            <person name="Kusano J."/>
            <person name="Kanehori K."/>
            <person name="Takahashi-Fujii A."/>
            <person name="Hara H."/>
            <person name="Tanase T.-O."/>
            <person name="Nomura Y."/>
            <person name="Togiya S."/>
            <person name="Komai F."/>
            <person name="Hara R."/>
            <person name="Takeuchi K."/>
            <person name="Arita M."/>
            <person name="Imose N."/>
            <person name="Musashino K."/>
            <person name="Yuuki H."/>
            <person name="Oshima A."/>
            <person name="Sasaki N."/>
            <person name="Aotsuka S."/>
            <person name="Yoshikawa Y."/>
            <person name="Matsunawa H."/>
            <person name="Ichihara T."/>
            <person name="Shiohata N."/>
            <person name="Sano S."/>
            <person name="Moriya S."/>
            <person name="Momiyama H."/>
            <person name="Satoh N."/>
            <person name="Takami S."/>
            <person name="Terashima Y."/>
            <person name="Suzuki O."/>
            <person name="Nakagawa S."/>
            <person name="Senoh A."/>
            <person name="Mizoguchi H."/>
            <person name="Goto Y."/>
            <person name="Shimizu F."/>
            <person name="Wakebe H."/>
            <person name="Hishigaki H."/>
            <person name="Watanabe T."/>
            <person name="Sugiyama A."/>
            <person name="Takemoto M."/>
            <person name="Kawakami B."/>
            <person name="Yamazaki M."/>
            <person name="Watanabe K."/>
            <person name="Kumagai A."/>
            <person name="Itakura S."/>
            <person name="Fukuzumi Y."/>
            <person name="Fujimori Y."/>
            <person name="Komiyama M."/>
            <person name="Tashiro H."/>
            <person name="Tanigami A."/>
            <person name="Fujiwara T."/>
            <person name="Ono T."/>
            <person name="Yamada K."/>
            <person name="Fujii Y."/>
            <person name="Ozaki K."/>
            <person name="Hirao M."/>
            <person name="Ohmori Y."/>
            <person name="Kawabata A."/>
            <person name="Hikiji T."/>
            <person name="Kobatake N."/>
            <person name="Inagaki H."/>
            <person name="Ikema Y."/>
            <person name="Okamoto S."/>
            <person name="Okitani R."/>
            <person name="Kawakami T."/>
            <person name="Noguchi S."/>
            <person name="Itoh T."/>
            <person name="Shigeta K."/>
            <person name="Senba T."/>
            <person name="Matsumura K."/>
            <person name="Nakajima Y."/>
            <person name="Mizuno T."/>
            <person name="Morinaga M."/>
            <person name="Sasaki M."/>
            <person name="Togashi T."/>
            <person name="Oyama M."/>
            <person name="Hata H."/>
            <person name="Watanabe M."/>
            <person name="Komatsu T."/>
            <person name="Mizushima-Sugano J."/>
            <person name="Satoh T."/>
            <person name="Shirai Y."/>
            <person name="Takahashi Y."/>
            <person name="Nakagawa K."/>
            <person name="Okumura K."/>
            <person name="Nagase T."/>
            <person name="Nomura N."/>
            <person name="Kikuchi H."/>
            <person name="Masuho Y."/>
            <person name="Yamashita R."/>
            <person name="Nakai K."/>
            <person name="Yada T."/>
            <person name="Nakamura Y."/>
            <person name="Ohara O."/>
            <person name="Isogai T."/>
            <person name="Sugano S."/>
        </authorList>
    </citation>
    <scope>NUCLEOTIDE SEQUENCE [LARGE SCALE MRNA] (ISOFORM 1)</scope>
</reference>
<reference key="4">
    <citation type="journal article" date="2001" name="Nature">
        <title>The DNA sequence and comparative analysis of human chromosome 20.</title>
        <authorList>
            <person name="Deloukas P."/>
            <person name="Matthews L.H."/>
            <person name="Ashurst J.L."/>
            <person name="Burton J."/>
            <person name="Gilbert J.G.R."/>
            <person name="Jones M."/>
            <person name="Stavrides G."/>
            <person name="Almeida J.P."/>
            <person name="Babbage A.K."/>
            <person name="Bagguley C.L."/>
            <person name="Bailey J."/>
            <person name="Barlow K.F."/>
            <person name="Bates K.N."/>
            <person name="Beard L.M."/>
            <person name="Beare D.M."/>
            <person name="Beasley O.P."/>
            <person name="Bird C.P."/>
            <person name="Blakey S.E."/>
            <person name="Bridgeman A.M."/>
            <person name="Brown A.J."/>
            <person name="Buck D."/>
            <person name="Burrill W.D."/>
            <person name="Butler A.P."/>
            <person name="Carder C."/>
            <person name="Carter N.P."/>
            <person name="Chapman J.C."/>
            <person name="Clamp M."/>
            <person name="Clark G."/>
            <person name="Clark L.N."/>
            <person name="Clark S.Y."/>
            <person name="Clee C.M."/>
            <person name="Clegg S."/>
            <person name="Cobley V.E."/>
            <person name="Collier R.E."/>
            <person name="Connor R.E."/>
            <person name="Corby N.R."/>
            <person name="Coulson A."/>
            <person name="Coville G.J."/>
            <person name="Deadman R."/>
            <person name="Dhami P.D."/>
            <person name="Dunn M."/>
            <person name="Ellington A.G."/>
            <person name="Frankland J.A."/>
            <person name="Fraser A."/>
            <person name="French L."/>
            <person name="Garner P."/>
            <person name="Grafham D.V."/>
            <person name="Griffiths C."/>
            <person name="Griffiths M.N.D."/>
            <person name="Gwilliam R."/>
            <person name="Hall R.E."/>
            <person name="Hammond S."/>
            <person name="Harley J.L."/>
            <person name="Heath P.D."/>
            <person name="Ho S."/>
            <person name="Holden J.L."/>
            <person name="Howden P.J."/>
            <person name="Huckle E."/>
            <person name="Hunt A.R."/>
            <person name="Hunt S.E."/>
            <person name="Jekosch K."/>
            <person name="Johnson C.M."/>
            <person name="Johnson D."/>
            <person name="Kay M.P."/>
            <person name="Kimberley A.M."/>
            <person name="King A."/>
            <person name="Knights A."/>
            <person name="Laird G.K."/>
            <person name="Lawlor S."/>
            <person name="Lehvaeslaiho M.H."/>
            <person name="Leversha M.A."/>
            <person name="Lloyd C."/>
            <person name="Lloyd D.M."/>
            <person name="Lovell J.D."/>
            <person name="Marsh V.L."/>
            <person name="Martin S.L."/>
            <person name="McConnachie L.J."/>
            <person name="McLay K."/>
            <person name="McMurray A.A."/>
            <person name="Milne S.A."/>
            <person name="Mistry D."/>
            <person name="Moore M.J.F."/>
            <person name="Mullikin J.C."/>
            <person name="Nickerson T."/>
            <person name="Oliver K."/>
            <person name="Parker A."/>
            <person name="Patel R."/>
            <person name="Pearce T.A.V."/>
            <person name="Peck A.I."/>
            <person name="Phillimore B.J.C.T."/>
            <person name="Prathalingam S.R."/>
            <person name="Plumb R.W."/>
            <person name="Ramsay H."/>
            <person name="Rice C.M."/>
            <person name="Ross M.T."/>
            <person name="Scott C.E."/>
            <person name="Sehra H.K."/>
            <person name="Shownkeen R."/>
            <person name="Sims S."/>
            <person name="Skuce C.D."/>
            <person name="Smith M.L."/>
            <person name="Soderlund C."/>
            <person name="Steward C.A."/>
            <person name="Sulston J.E."/>
            <person name="Swann R.M."/>
            <person name="Sycamore N."/>
            <person name="Taylor R."/>
            <person name="Tee L."/>
            <person name="Thomas D.W."/>
            <person name="Thorpe A."/>
            <person name="Tracey A."/>
            <person name="Tromans A.C."/>
            <person name="Vaudin M."/>
            <person name="Wall M."/>
            <person name="Wallis J.M."/>
            <person name="Whitehead S.L."/>
            <person name="Whittaker P."/>
            <person name="Willey D.L."/>
            <person name="Williams L."/>
            <person name="Williams S.A."/>
            <person name="Wilming L."/>
            <person name="Wray P.W."/>
            <person name="Hubbard T."/>
            <person name="Durbin R.M."/>
            <person name="Bentley D.R."/>
            <person name="Beck S."/>
            <person name="Rogers J."/>
        </authorList>
    </citation>
    <scope>NUCLEOTIDE SEQUENCE [LARGE SCALE GENOMIC DNA]</scope>
</reference>
<reference key="5">
    <citation type="submission" date="2005-09" db="EMBL/GenBank/DDBJ databases">
        <authorList>
            <person name="Mural R.J."/>
            <person name="Istrail S."/>
            <person name="Sutton G.G."/>
            <person name="Florea L."/>
            <person name="Halpern A.L."/>
            <person name="Mobarry C.M."/>
            <person name="Lippert R."/>
            <person name="Walenz B."/>
            <person name="Shatkay H."/>
            <person name="Dew I."/>
            <person name="Miller J.R."/>
            <person name="Flanigan M.J."/>
            <person name="Edwards N.J."/>
            <person name="Bolanos R."/>
            <person name="Fasulo D."/>
            <person name="Halldorsson B.V."/>
            <person name="Hannenhalli S."/>
            <person name="Turner R."/>
            <person name="Yooseph S."/>
            <person name="Lu F."/>
            <person name="Nusskern D.R."/>
            <person name="Shue B.C."/>
            <person name="Zheng X.H."/>
            <person name="Zhong F."/>
            <person name="Delcher A.L."/>
            <person name="Huson D.H."/>
            <person name="Kravitz S.A."/>
            <person name="Mouchard L."/>
            <person name="Reinert K."/>
            <person name="Remington K.A."/>
            <person name="Clark A.G."/>
            <person name="Waterman M.S."/>
            <person name="Eichler E.E."/>
            <person name="Adams M.D."/>
            <person name="Hunkapiller M.W."/>
            <person name="Myers E.W."/>
            <person name="Venter J.C."/>
        </authorList>
    </citation>
    <scope>NUCLEOTIDE SEQUENCE [LARGE SCALE GENOMIC DNA]</scope>
</reference>
<reference key="6">
    <citation type="journal article" date="2004" name="Genome Res.">
        <title>The status, quality, and expansion of the NIH full-length cDNA project: the Mammalian Gene Collection (MGC).</title>
        <authorList>
            <consortium name="The MGC Project Team"/>
        </authorList>
    </citation>
    <scope>NUCLEOTIDE SEQUENCE [LARGE SCALE MRNA]</scope>
    <source>
        <tissue>Bone</tissue>
        <tissue>Brain</tissue>
        <tissue>Liver</tissue>
    </source>
</reference>
<reference key="7">
    <citation type="submission" date="2007-07" db="UniProtKB">
        <authorList>
            <person name="Bienvenut W.V."/>
            <person name="Matallanas D."/>
            <person name="Cooper W.N."/>
            <person name="Kolch W."/>
        </authorList>
    </citation>
    <scope>PROTEIN SEQUENCE OF 1-7; 16-94; 118-144; 152-181; 232-259; 270-282; 292-301; 333-342; 384-402; 405-413; 421-465 AND 470-481</scope>
    <scope>ACETYLATION AT MET-1</scope>
    <scope>IDENTIFICATION BY MASS SPECTROMETRY</scope>
    <source>
        <tissue>Mammary carcinoma</tissue>
    </source>
</reference>
<reference key="8">
    <citation type="journal article" date="1996" name="J. Biol. Chem.">
        <title>The Ste20-like protein kinase, Mst1, dimerizes and contains an inhibitory domain.</title>
        <authorList>
            <person name="Creasy C.L."/>
            <person name="Ambrose D.M."/>
            <person name="Chernoff J."/>
        </authorList>
    </citation>
    <scope>FUNCTION</scope>
    <scope>HOMODIMERIZATION</scope>
    <scope>ACTIVITY REGULATION</scope>
</reference>
<reference key="9">
    <citation type="journal article" date="2001" name="J. Biol. Chem.">
        <title>MST, a physiological caspase substrate, highly sensitizes apoptosis both upstream and downstream of caspase activation.</title>
        <authorList>
            <person name="Lee K.-K."/>
            <person name="Ohyama T."/>
            <person name="Yajima N."/>
            <person name="Tsubuki S."/>
            <person name="Yonehara S."/>
        </authorList>
    </citation>
    <scope>FUNCTION</scope>
    <scope>PROTEOLYTIC PROCESSING</scope>
    <scope>SUBCELLULAR LOCATION</scope>
    <scope>MUTAGENESIS OF ASP-326 AND ASP-349</scope>
</reference>
<reference key="10">
    <citation type="journal article" date="2001" name="Proc. Natl. Acad. Sci. U.S.A.">
        <title>Caspase cleavage of MST1 promotes nuclear translocation and chromatin condensation.</title>
        <authorList>
            <person name="Ura S."/>
            <person name="Masuyama N."/>
            <person name="Graves J.D."/>
            <person name="Gotoh Y."/>
        </authorList>
    </citation>
    <scope>FUNCTION</scope>
    <scope>SUBCELLULAR LOCATION</scope>
</reference>
<reference key="11">
    <citation type="journal article" date="2003" name="Cell">
        <title>Apoptotic phosphorylation of histone H2B is mediated by mammalian sterile twenty kinase.</title>
        <authorList>
            <person name="Cheung W.L."/>
            <person name="Ajiro K."/>
            <person name="Samejima K."/>
            <person name="Kloc M."/>
            <person name="Cheung P."/>
            <person name="Mizzen C.A."/>
            <person name="Beeser A."/>
            <person name="Etkin L.D."/>
            <person name="Chernoff J."/>
            <person name="Earnshaw W.C."/>
            <person name="Allis C.D."/>
        </authorList>
    </citation>
    <scope>FUNCTION IN PHOSPHORYLATION OF HISTONE H2B</scope>
</reference>
<reference key="12">
    <citation type="journal article" date="2004" name="Biochem. J.">
        <title>Regulation of the MST1 kinase by autophosphorylation, by the growth inhibitory proteins, RASSF1 and NORE1, and by Ras.</title>
        <authorList>
            <person name="Praskova M."/>
            <person name="Khoklatchev A."/>
            <person name="Ortiz-Vega S."/>
            <person name="Avruch J."/>
        </authorList>
    </citation>
    <scope>FUNCTION</scope>
    <scope>ACTIVITY REGULATION</scope>
    <scope>HOMODIMERIZATION</scope>
    <scope>PHOSPHORYLATION AT THR-183</scope>
    <scope>MUTAGENESIS OF LYS-59; THR-175; THR-177; THR-183 AND LEU-444</scope>
    <scope>INTERACTION WITH RASSF1 AND NORE1</scope>
    <scope>CATALYTIC ACTIVITY</scope>
</reference>
<reference key="13">
    <citation type="journal article" date="2006" name="Cancer Res.">
        <title>Role of the tumor suppressor RASSF1A in Mst1-mediated apoptosis.</title>
        <authorList>
            <person name="Oh H.J."/>
            <person name="Lee K.-K."/>
            <person name="Song S.J."/>
            <person name="Jin M.S."/>
            <person name="Song M.S."/>
            <person name="Lee J.H."/>
            <person name="Im C.R."/>
            <person name="Lee J.-O."/>
            <person name="Yonehara S."/>
            <person name="Lim D.-S."/>
        </authorList>
    </citation>
    <scope>FUNCTION</scope>
    <scope>INTERACTION WITH RASSF1</scope>
</reference>
<reference key="14">
    <citation type="journal article" date="2006" name="Cell">
        <title>A conserved MST-FOXO signaling pathway mediates oxidative-stress responses and extends life span.</title>
        <authorList>
            <person name="Lehtinen M.K."/>
            <person name="Yuan Z."/>
            <person name="Boag P.R."/>
            <person name="Yang Y."/>
            <person name="Villen J."/>
            <person name="Becker E.B.E."/>
            <person name="DiBacco S."/>
            <person name="de la Iglesia N."/>
            <person name="Gygi S.P."/>
            <person name="Blackwell T.K."/>
            <person name="Bonni A."/>
        </authorList>
    </citation>
    <scope>FUNCTION</scope>
    <scope>INTERACTION WITH FOXO3</scope>
</reference>
<reference key="15">
    <citation type="journal article" date="2006" name="FEBS J.">
        <title>Association of mammalian sterile twenty kinases, Mst1 and Mst2, with hSalvador via C-terminal coiled-coil domains, leads to its stabilization and phosphorylation.</title>
        <authorList>
            <person name="Callus B.A."/>
            <person name="Verhagen A.M."/>
            <person name="Vaux D.L."/>
        </authorList>
    </citation>
    <scope>INTERACTION WITH SAV1</scope>
    <scope>FUNCTION</scope>
    <scope>MUTAGENESIS OF LYS-59</scope>
</reference>
<reference key="16">
    <citation type="journal article" date="2007" name="EMBO J.">
        <title>The pro-apoptotic kinase Mst1 and its caspase cleavage products are direct inhibitors of Akt1.</title>
        <authorList>
            <person name="Cinar B."/>
            <person name="Fang P.K."/>
            <person name="Lutchman M."/>
            <person name="Di Vizio D."/>
            <person name="Adam R.M."/>
            <person name="Pavlova N."/>
            <person name="Rubin M.A."/>
            <person name="Yelick P.C."/>
            <person name="Freeman M.R."/>
        </authorList>
    </citation>
    <scope>FUNCTION</scope>
    <scope>INTERACTION WITH PKB/AKT1</scope>
    <scope>SUBCELLULAR LOCATION</scope>
    <scope>TISSUE SPECIFICITY</scope>
</reference>
<reference key="17">
    <citation type="journal article" date="2007" name="J. Biol. Chem.">
        <title>Akt phosphorylates MstI and prevents its proteolytic activation, blocking FOXO3 phosphorylation and nuclear translocation.</title>
        <authorList>
            <person name="Jang S.W."/>
            <person name="Yang S.J."/>
            <person name="Srinivasan S."/>
            <person name="Ye K."/>
        </authorList>
    </citation>
    <scope>PHOSPHORYLATION AT THR-387</scope>
    <scope>INTERACTION WITH PKB/AKT1</scope>
</reference>
<reference key="18">
    <citation type="journal article" date="2008" name="Curr. Biol.">
        <title>MOBKL1A/MOBKL1B phosphorylation by MST1 and MST2 inhibits cell proliferation.</title>
        <authorList>
            <person name="Praskova M."/>
            <person name="Xia F."/>
            <person name="Avruch J."/>
        </authorList>
    </citation>
    <scope>FUNCTION</scope>
    <scope>CATALYTIC ACTIVITY</scope>
</reference>
<reference key="19">
    <citation type="journal article" date="2008" name="Mol. Cell">
        <title>Kinase-selective enrichment enables quantitative phosphoproteomics of the kinome across the cell cycle.</title>
        <authorList>
            <person name="Daub H."/>
            <person name="Olsen J.V."/>
            <person name="Bairlein M."/>
            <person name="Gnad F."/>
            <person name="Oppermann F.S."/>
            <person name="Korner R."/>
            <person name="Greff Z."/>
            <person name="Keri G."/>
            <person name="Stemmann O."/>
            <person name="Mann M."/>
        </authorList>
    </citation>
    <scope>PHOSPHORYLATION [LARGE SCALE ANALYSIS] AT SER-265; SER-320 AND THR-340</scope>
    <scope>IDENTIFICATION BY MASS SPECTROMETRY [LARGE SCALE ANALYSIS]</scope>
    <source>
        <tissue>Cervix carcinoma</tissue>
    </source>
</reference>
<reference key="20">
    <citation type="journal article" date="2008" name="Proc. Natl. Acad. Sci. U.S.A.">
        <title>A quantitative atlas of mitotic phosphorylation.</title>
        <authorList>
            <person name="Dephoure N."/>
            <person name="Zhou C."/>
            <person name="Villen J."/>
            <person name="Beausoleil S.A."/>
            <person name="Bakalarski C.E."/>
            <person name="Elledge S.J."/>
            <person name="Gygi S.P."/>
        </authorList>
    </citation>
    <scope>PHOSPHORYLATION [LARGE SCALE ANALYSIS] AT SER-320</scope>
    <scope>IDENTIFICATION BY MASS SPECTROMETRY [LARGE SCALE ANALYSIS]</scope>
    <source>
        <tissue>Cervix carcinoma</tissue>
    </source>
</reference>
<reference key="21">
    <citation type="journal article" date="2009" name="BioFactors">
        <title>Mammalian NDR/LATS protein kinases in hippo tumor suppressor signaling.</title>
        <authorList>
            <person name="Hergovich A."/>
            <person name="Hemmings B.A."/>
        </authorList>
    </citation>
    <scope>REVIEW</scope>
</reference>
<reference key="22">
    <citation type="journal article" date="2009" name="Biochem. J.">
        <title>Phosphorylation of cardiac troponin I by mammalian sterile 20-like kinase 1.</title>
        <authorList>
            <person name="You B."/>
            <person name="Yan G."/>
            <person name="Zhang Z."/>
            <person name="Yan L."/>
            <person name="Li J."/>
            <person name="Ge Q."/>
            <person name="Jin J.P."/>
            <person name="Sun J."/>
        </authorList>
    </citation>
    <scope>FUNCTION</scope>
    <scope>INTERACTION WITH TNNI3</scope>
</reference>
<reference key="23">
    <citation type="journal article" date="2009" name="Mol. Cell. Proteomics">
        <title>Large-scale proteomics analysis of the human kinome.</title>
        <authorList>
            <person name="Oppermann F.S."/>
            <person name="Gnad F."/>
            <person name="Olsen J.V."/>
            <person name="Hornberger R."/>
            <person name="Greff Z."/>
            <person name="Keri G."/>
            <person name="Mann M."/>
            <person name="Daub H."/>
        </authorList>
    </citation>
    <scope>ACETYLATION [LARGE SCALE ANALYSIS] AT MET-1</scope>
    <scope>PHOSPHORYLATION [LARGE SCALE ANALYSIS] AT THR-3; SER-320; THR-340; THR-367; SER-410 AND SER-414</scope>
    <scope>IDENTIFICATION BY MASS SPECTROMETRY [LARGE SCALE ANALYSIS]</scope>
</reference>
<reference key="24">
    <citation type="journal article" date="2009" name="Oncogene">
        <title>RASSF2 associates with and stabilizes the proapoptotic kinase MST2.</title>
        <authorList>
            <person name="Cooper W.N."/>
            <person name="Hesson L.B."/>
            <person name="Matallanas D."/>
            <person name="Dallol A."/>
            <person name="von Kriegsheim A."/>
            <person name="Ward R."/>
            <person name="Kolch W."/>
            <person name="Latif F."/>
        </authorList>
    </citation>
    <scope>FUNCTION</scope>
    <scope>INTERACTION WITH RASSF2</scope>
    <scope>SUBCELLULAR LOCATION</scope>
</reference>
<reference key="25">
    <citation type="journal article" date="2009" name="Sci. Signal.">
        <title>Quantitative phosphoproteomic analysis of T cell receptor signaling reveals system-wide modulation of protein-protein interactions.</title>
        <authorList>
            <person name="Mayya V."/>
            <person name="Lundgren D.H."/>
            <person name="Hwang S.-I."/>
            <person name="Rezaul K."/>
            <person name="Wu L."/>
            <person name="Eng J.K."/>
            <person name="Rodionov V."/>
            <person name="Han D.K."/>
        </authorList>
    </citation>
    <scope>PHOSPHORYLATION [LARGE SCALE ANALYSIS] AT SER-320</scope>
    <scope>IDENTIFICATION BY MASS SPECTROMETRY [LARGE SCALE ANALYSIS]</scope>
    <source>
        <tissue>Leukemic T-cell</tissue>
    </source>
</reference>
<reference key="26">
    <citation type="journal article" date="2010" name="J. Biol. Chem.">
        <title>Phosphoinositide 3-kinase/Akt inhibits MST1-mediated pro-apoptotic signaling through phosphorylation of threonine 120.</title>
        <authorList>
            <person name="Yuan Z."/>
            <person name="Kim D."/>
            <person name="Shu S."/>
            <person name="Wu J."/>
            <person name="Guo J."/>
            <person name="Xiao L."/>
            <person name="Kaneko S."/>
            <person name="Coppola D."/>
            <person name="Cheng J.Q."/>
        </authorList>
    </citation>
    <scope>RETRACTED PAPER</scope>
</reference>
<reference key="27">
    <citation type="journal article" date="2016" name="J. Biol. Chem.">
        <authorList>
            <person name="Yuan Z."/>
            <person name="Kim D."/>
            <person name="Shu S."/>
            <person name="Wu J."/>
            <person name="Guo J."/>
            <person name="Xiao L."/>
            <person name="Kaneko S."/>
            <person name="Coppola D."/>
            <person name="Cheng J.Q."/>
        </authorList>
    </citation>
    <scope>CAUTION</scope>
    <scope>RETRACTION NOTICE OF PUBMED:19940129</scope>
</reference>
<reference key="28">
    <citation type="journal article" date="2010" name="Sci. Signal.">
        <title>Quantitative phosphoproteomics reveals widespread full phosphorylation site occupancy during mitosis.</title>
        <authorList>
            <person name="Olsen J.V."/>
            <person name="Vermeulen M."/>
            <person name="Santamaria A."/>
            <person name="Kumar C."/>
            <person name="Miller M.L."/>
            <person name="Jensen L.J."/>
            <person name="Gnad F."/>
            <person name="Cox J."/>
            <person name="Jensen T.S."/>
            <person name="Nigg E.A."/>
            <person name="Brunak S."/>
            <person name="Mann M."/>
        </authorList>
    </citation>
    <scope>PHOSPHORYLATION [LARGE SCALE ANALYSIS] AT SER-320</scope>
    <scope>IDENTIFICATION BY MASS SPECTROMETRY [LARGE SCALE ANALYSIS]</scope>
    <source>
        <tissue>Cervix carcinoma</tissue>
    </source>
</reference>
<reference key="29">
    <citation type="journal article" date="2011" name="BMC Syst. Biol.">
        <title>Initial characterization of the human central proteome.</title>
        <authorList>
            <person name="Burkard T.R."/>
            <person name="Planyavsky M."/>
            <person name="Kaupe I."/>
            <person name="Breitwieser F.P."/>
            <person name="Buerckstuemmer T."/>
            <person name="Bennett K.L."/>
            <person name="Superti-Furga G."/>
            <person name="Colinge J."/>
        </authorList>
    </citation>
    <scope>IDENTIFICATION BY MASS SPECTROMETRY [LARGE SCALE ANALYSIS]</scope>
</reference>
<reference key="30">
    <citation type="journal article" date="2011" name="Cancer Res.">
        <title>Hippo/Mst1 stimulates transcription of the proapoptotic mediator NOXA in a FoxO1-dependent manner.</title>
        <authorList>
            <person name="Valis K."/>
            <person name="Prochazka L."/>
            <person name="Boura E."/>
            <person name="Chladova J."/>
            <person name="Obsil T."/>
            <person name="Rohlena J."/>
            <person name="Truksa J."/>
            <person name="Dong L.F."/>
            <person name="Ralph S.J."/>
            <person name="Neuzil J."/>
        </authorList>
    </citation>
    <scope>FUNCTION</scope>
</reference>
<reference key="31">
    <citation type="journal article" date="2011" name="Cancer Res.">
        <title>MST1 is a multifunctional caspase-independent inhibitor of androgenic signaling.</title>
        <authorList>
            <person name="Cinar B."/>
            <person name="Collak F.K."/>
            <person name="Lopez D."/>
            <person name="Akgul S."/>
            <person name="Mukhopadhyay N.K."/>
            <person name="Kilicarslan M."/>
            <person name="Gioeli D.G."/>
            <person name="Freeman M.R."/>
        </authorList>
    </citation>
    <scope>FUNCTION</scope>
    <scope>SUBCELLULAR LOCATION</scope>
    <scope>INTERACTION WITH AR</scope>
</reference>
<reference key="32">
    <citation type="journal article" date="2011" name="J. Biol. Chem.">
        <title>The tumor suppressor RASSF1A prevents dephosphorylation of the mammalian STE20-like kinases MST1 and MST2.</title>
        <authorList>
            <person name="Guo C."/>
            <person name="Zhang X."/>
            <person name="Pfeifer G.P."/>
        </authorList>
    </citation>
    <scope>INTERACTION WITH RASSF1</scope>
    <scope>ACTIVITY REGULATION</scope>
</reference>
<reference key="33">
    <citation type="journal article" date="2011" name="J. Biol. Chem.">
        <title>MST1 promotes apoptosis through regulating Sirt1-dependent p53 deacetylation.</title>
        <authorList>
            <person name="Yuan F."/>
            <person name="Xie Q."/>
            <person name="Wu J."/>
            <person name="Bai Y."/>
            <person name="Mao B."/>
            <person name="Dong Y."/>
            <person name="Bi W."/>
            <person name="Ji G."/>
            <person name="Tao W."/>
            <person name="Wang Y."/>
            <person name="Yuan Z."/>
        </authorList>
    </citation>
    <scope>FUNCTION</scope>
    <scope>INTERACTION WITH SIRT1</scope>
</reference>
<reference key="34">
    <citation type="journal article" date="2011" name="Sci. Signal.">
        <title>System-wide temporal characterization of the proteome and phosphoproteome of human embryonic stem cell differentiation.</title>
        <authorList>
            <person name="Rigbolt K.T."/>
            <person name="Prokhorova T.A."/>
            <person name="Akimov V."/>
            <person name="Henningsen J."/>
            <person name="Johansen P.T."/>
            <person name="Kratchmarova I."/>
            <person name="Kassem M."/>
            <person name="Mann M."/>
            <person name="Olsen J.V."/>
            <person name="Blagoev B."/>
        </authorList>
    </citation>
    <scope>PHOSPHORYLATION [LARGE SCALE ANALYSIS] AT SER-320</scope>
    <scope>IDENTIFICATION BY MASS SPECTROMETRY [LARGE SCALE ANALYSIS]</scope>
</reference>
<reference key="35">
    <citation type="journal article" date="2012" name="Blood">
        <title>The phenotype of human STK4 deficiency.</title>
        <authorList>
            <person name="Abdollahpour H."/>
            <person name="Appaswamy G."/>
            <person name="Kotlarz D."/>
            <person name="Diestelhorst J."/>
            <person name="Beier R."/>
            <person name="Schaffer A.A."/>
            <person name="Gertz E.M."/>
            <person name="Schambach A."/>
            <person name="Kreipe H.H."/>
            <person name="Pfeifer D."/>
            <person name="Engelhardt K.R."/>
            <person name="Rezaei N."/>
            <person name="Grimbacher B."/>
            <person name="Lohrmann S."/>
            <person name="Sherkat R."/>
            <person name="Klein C."/>
        </authorList>
    </citation>
    <scope>INVOLVEMENT IN IMD110</scope>
</reference>
<reference key="36">
    <citation type="journal article" date="2012" name="Mol. Cell. Proteomics">
        <title>Comparative large-scale characterisation of plant vs. mammal proteins reveals similar and idiosyncratic N-alpha acetylation features.</title>
        <authorList>
            <person name="Bienvenut W.V."/>
            <person name="Sumpton D."/>
            <person name="Martinez A."/>
            <person name="Lilla S."/>
            <person name="Espagne C."/>
            <person name="Meinnel T."/>
            <person name="Giglione C."/>
        </authorList>
    </citation>
    <scope>ACETYLATION [LARGE SCALE ANALYSIS] AT MET-1</scope>
    <scope>IDENTIFICATION BY MASS SPECTROMETRY [LARGE SCALE ANALYSIS]</scope>
</reference>
<reference key="37">
    <citation type="journal article" date="2012" name="Proc. Natl. Acad. Sci. U.S.A.">
        <title>N-terminal acetylome analyses and functional insights of the N-terminal acetyltransferase NatB.</title>
        <authorList>
            <person name="Van Damme P."/>
            <person name="Lasa M."/>
            <person name="Polevoda B."/>
            <person name="Gazquez C."/>
            <person name="Elosegui-Artola A."/>
            <person name="Kim D.S."/>
            <person name="De Juan-Pardo E."/>
            <person name="Demeyer K."/>
            <person name="Hole K."/>
            <person name="Larrea E."/>
            <person name="Timmerman E."/>
            <person name="Prieto J."/>
            <person name="Arnesen T."/>
            <person name="Sherman F."/>
            <person name="Gevaert K."/>
            <person name="Aldabe R."/>
        </authorList>
    </citation>
    <scope>ACETYLATION [LARGE SCALE ANALYSIS] AT MET-1</scope>
    <scope>IDENTIFICATION BY MASS SPECTROMETRY [LARGE SCALE ANALYSIS]</scope>
</reference>
<reference key="38">
    <citation type="journal article" date="2013" name="J. Proteome Res.">
        <title>Toward a comprehensive characterization of a human cancer cell phosphoproteome.</title>
        <authorList>
            <person name="Zhou H."/>
            <person name="Di Palma S."/>
            <person name="Preisinger C."/>
            <person name="Peng M."/>
            <person name="Polat A.N."/>
            <person name="Heck A.J."/>
            <person name="Mohammed S."/>
        </authorList>
    </citation>
    <scope>PHOSPHORYLATION [LARGE SCALE ANALYSIS] AT THR-340; THR-387; SER-410 AND SER-414</scope>
    <scope>IDENTIFICATION BY MASS SPECTROMETRY [LARGE SCALE ANALYSIS]</scope>
    <source>
        <tissue>Erythroleukemia</tissue>
    </source>
</reference>
<reference key="39">
    <citation type="journal article" date="2014" name="J. Proteomics">
        <title>An enzyme assisted RP-RPLC approach for in-depth analysis of human liver phosphoproteome.</title>
        <authorList>
            <person name="Bian Y."/>
            <person name="Song C."/>
            <person name="Cheng K."/>
            <person name="Dong M."/>
            <person name="Wang F."/>
            <person name="Huang J."/>
            <person name="Sun D."/>
            <person name="Wang L."/>
            <person name="Ye M."/>
            <person name="Zou H."/>
        </authorList>
    </citation>
    <scope>PHOSPHORYLATION [LARGE SCALE ANALYSIS] AT SER-320</scope>
    <scope>IDENTIFICATION BY MASS SPECTROMETRY [LARGE SCALE ANALYSIS]</scope>
    <source>
        <tissue>Liver</tissue>
    </source>
</reference>
<reference key="40">
    <citation type="journal article" date="2016" name="Genes Dev.">
        <title>DLG5 connects cell polarity and Hippo signaling protein networks by linking PAR-1 with MST1/2.</title>
        <authorList>
            <person name="Kwan J."/>
            <person name="Sczaniecka A."/>
            <person name="Arash E.H."/>
            <person name="Nguyen L."/>
            <person name="Chen C.C."/>
            <person name="Ratkovic S."/>
            <person name="Klezovitch O."/>
            <person name="Attisano L."/>
            <person name="McNeill H."/>
            <person name="Emili A."/>
            <person name="Vasioukhin V."/>
        </authorList>
    </citation>
    <scope>INTERACTION WITH MARK3 AND DLG5</scope>
</reference>
<reference key="41">
    <citation type="journal article" date="2017" name="Sci. Rep.">
        <title>Loss of DLG5 promotes breast cancer malignancy by inhibiting the Hippo signaling pathway.</title>
        <authorList>
            <person name="Liu J."/>
            <person name="Li J."/>
            <person name="Li P."/>
            <person name="Wang Y."/>
            <person name="Liang Z."/>
            <person name="Jiang Y."/>
            <person name="Li J."/>
            <person name="Feng C."/>
            <person name="Wang R."/>
            <person name="Chen H."/>
            <person name="Zhou C."/>
            <person name="Zhang J."/>
            <person name="Yang J."/>
            <person name="Liu P."/>
        </authorList>
    </citation>
    <scope>INTERACTION WITH SCRIB</scope>
</reference>
<reference key="42">
    <citation type="journal article" date="2007" name="Nature">
        <title>Patterns of somatic mutation in human cancer genomes.</title>
        <authorList>
            <person name="Greenman C."/>
            <person name="Stephens P."/>
            <person name="Smith R."/>
            <person name="Dalgliesh G.L."/>
            <person name="Hunter C."/>
            <person name="Bignell G."/>
            <person name="Davies H."/>
            <person name="Teague J."/>
            <person name="Butler A."/>
            <person name="Stevens C."/>
            <person name="Edkins S."/>
            <person name="O'Meara S."/>
            <person name="Vastrik I."/>
            <person name="Schmidt E.E."/>
            <person name="Avis T."/>
            <person name="Barthorpe S."/>
            <person name="Bhamra G."/>
            <person name="Buck G."/>
            <person name="Choudhury B."/>
            <person name="Clements J."/>
            <person name="Cole J."/>
            <person name="Dicks E."/>
            <person name="Forbes S."/>
            <person name="Gray K."/>
            <person name="Halliday K."/>
            <person name="Harrison R."/>
            <person name="Hills K."/>
            <person name="Hinton J."/>
            <person name="Jenkinson A."/>
            <person name="Jones D."/>
            <person name="Menzies A."/>
            <person name="Mironenko T."/>
            <person name="Perry J."/>
            <person name="Raine K."/>
            <person name="Richardson D."/>
            <person name="Shepherd R."/>
            <person name="Small A."/>
            <person name="Tofts C."/>
            <person name="Varian J."/>
            <person name="Webb T."/>
            <person name="West S."/>
            <person name="Widaa S."/>
            <person name="Yates A."/>
            <person name="Cahill D.P."/>
            <person name="Louis D.N."/>
            <person name="Goldstraw P."/>
            <person name="Nicholson A.G."/>
            <person name="Brasseur F."/>
            <person name="Looijenga L."/>
            <person name="Weber B.L."/>
            <person name="Chiew Y.-E."/>
            <person name="DeFazio A."/>
            <person name="Greaves M.F."/>
            <person name="Green A.R."/>
            <person name="Campbell P."/>
            <person name="Birney E."/>
            <person name="Easton D.F."/>
            <person name="Chenevix-Trench G."/>
            <person name="Tan M.-H."/>
            <person name="Khoo S.K."/>
            <person name="Teh B.T."/>
            <person name="Yuen S.T."/>
            <person name="Leung S.Y."/>
            <person name="Wooster R."/>
            <person name="Futreal P.A."/>
            <person name="Stratton M.R."/>
        </authorList>
    </citation>
    <scope>VARIANTS [LARGE SCALE ANALYSIS] ASN-162; GLN-310; MET-312; THR-355 AND LEU-416</scope>
</reference>
<gene>
    <name evidence="36" type="primary">STK4</name>
    <name evidence="33" type="synonym">KRS2</name>
    <name evidence="32" type="synonym">MST1</name>
</gene>
<accession>Q13043</accession>
<accession>B2RCR8</accession>
<accession>Q15802</accession>
<accession>Q4G156</accession>
<accession>Q5H982</accession>
<accession>Q6PD60</accession>
<accession>Q9BR32</accession>
<accession>Q9NTZ4</accession>
<comment type="function">
    <text evidence="2 7 8 9 10 11 12 13 16 17 18 19 22 23 24 29 30">Stress-activated, pro-apoptotic kinase which, following caspase-cleavage, enters the nucleus and induces chromatin condensation followed by internucleosomal DNA fragmentation. Key component of the Hippo signaling pathway which plays a pivotal role in organ size control and tumor suppression by restricting proliferation and promoting apoptosis. The core of this pathway is composed of a kinase cascade wherein STK3/MST2 and STK4/MST1, in complex with its regulatory protein SAV1, phosphorylates and activates LATS1/2 in complex with its regulatory protein MOB1, which in turn phosphorylates and inactivates YAP1 oncoprotein and WWTR1/TAZ. Phosphorylation of YAP1 by LATS2 inhibits its translocation into the nucleus to regulate cellular genes important for cell proliferation, cell death, and cell migration. STK3/MST2 and STK4/MST1 are required to repress proliferation of mature hepatocytes, to prevent activation of facultative adult liver stem cells (oval cells), and to inhibit tumor formation (By similarity). Phosphorylates 'Ser-14' of histone H2B (H2BS14ph) during apoptosis. Phosphorylates FOXO3 upon oxidative stress, which results in its nuclear translocation and cell death initiation. Phosphorylates MOBKL1A, MOBKL1B and RASSF2. Phosphorylates TNNI3 (cardiac Tn-I) and alters its binding affinity to TNNC1 (cardiac Tn-C) and TNNT2 (cardiac Tn-T). Phosphorylates FOXO1 on 'Ser-212' and regulates its activation and stimulates transcription of PMAIP1 in a FOXO1-dependent manner. Phosphorylates SIRT1 and inhibits SIRT1-mediated p53/TP53 deacetylation, thereby promoting p53/TP53 dependent transcription and apoptosis upon DNA damage. Acts as an inhibitor of PKB/AKT1. Phosphorylates AR on 'Ser-650' and suppresses its activity by intersecting with PKB/AKT1 signaling and antagonizing formation of AR-chromatin complexes.</text>
</comment>
<comment type="catalytic activity">
    <reaction evidence="17">
        <text>L-seryl-[protein] + ATP = O-phospho-L-seryl-[protein] + ADP + H(+)</text>
        <dbReference type="Rhea" id="RHEA:17989"/>
        <dbReference type="Rhea" id="RHEA-COMP:9863"/>
        <dbReference type="Rhea" id="RHEA-COMP:11604"/>
        <dbReference type="ChEBI" id="CHEBI:15378"/>
        <dbReference type="ChEBI" id="CHEBI:29999"/>
        <dbReference type="ChEBI" id="CHEBI:30616"/>
        <dbReference type="ChEBI" id="CHEBI:83421"/>
        <dbReference type="ChEBI" id="CHEBI:456216"/>
        <dbReference type="EC" id="2.7.11.1"/>
    </reaction>
    <physiologicalReaction direction="left-to-right" evidence="17">
        <dbReference type="Rhea" id="RHEA:17990"/>
    </physiologicalReaction>
</comment>
<comment type="catalytic activity">
    <reaction evidence="10 17">
        <text>L-threonyl-[protein] + ATP = O-phospho-L-threonyl-[protein] + ADP + H(+)</text>
        <dbReference type="Rhea" id="RHEA:46608"/>
        <dbReference type="Rhea" id="RHEA-COMP:11060"/>
        <dbReference type="Rhea" id="RHEA-COMP:11605"/>
        <dbReference type="ChEBI" id="CHEBI:15378"/>
        <dbReference type="ChEBI" id="CHEBI:30013"/>
        <dbReference type="ChEBI" id="CHEBI:30616"/>
        <dbReference type="ChEBI" id="CHEBI:61977"/>
        <dbReference type="ChEBI" id="CHEBI:456216"/>
        <dbReference type="EC" id="2.7.11.1"/>
    </reaction>
    <physiologicalReaction direction="left-to-right" evidence="10 17">
        <dbReference type="Rhea" id="RHEA:46609"/>
    </physiologicalReaction>
</comment>
<comment type="cofactor">
    <cofactor>
        <name>Mg(2+)</name>
        <dbReference type="ChEBI" id="CHEBI:18420"/>
    </cofactor>
</comment>
<comment type="activity regulation">
    <text evidence="10 21 29">Inhibited by the C-terminal non-catalytic region. Activated by caspase-cleavage. Full activation also requires homodimerization and autophosphorylation of Thr-183. Activated by RASSF1 which acts by preventing its dephosphorylation.</text>
</comment>
<comment type="subunit">
    <text evidence="1 10 11 12 13 15 16 18 19 21 22 24 26 27">Homodimer; mediated via the coiled-coil region. Interacts with NORE1, which inhibits autoactivation. Interacts with and stabilizes SAV1. Interacts with RASSF1. Interacts with FOXO3. Interacts with RASSF2 (via SARAH domain). Interacts with AR, PKB/AKT1, TNNI3 and SIRT1. Interacts with DLG5 (via PDZ domain 3). Interacts with MARK3 in the presence of DLG5 (PubMed:28087714). Interacts with SCRIB in the presence of DLG5 (PubMed:28169360).</text>
</comment>
<comment type="interaction">
    <interactant intactId="EBI-367376">
        <id>Q13043</id>
    </interactant>
    <interactant intactId="EBI-296087">
        <id>P31749</id>
        <label>AKT1</label>
    </interactant>
    <organismsDiffer>false</organismsDiffer>
    <experiments>13</experiments>
</comment>
<comment type="interaction">
    <interactant intactId="EBI-367376">
        <id>Q13043</id>
    </interactant>
    <interactant intactId="EBI-712001">
        <id>O95166</id>
        <label>GABARAP</label>
    </interactant>
    <organismsDiffer>false</organismsDiffer>
    <experiments>2</experiments>
</comment>
<comment type="interaction">
    <interactant intactId="EBI-367376">
        <id>Q13043</id>
    </interactant>
    <interactant intactId="EBI-746969">
        <id>Q9H0R8</id>
        <label>GABARAPL1</label>
    </interactant>
    <organismsDiffer>false</organismsDiffer>
    <experiments>2</experiments>
</comment>
<comment type="interaction">
    <interactant intactId="EBI-367376">
        <id>Q13043</id>
    </interactant>
    <interactant intactId="EBI-720116">
        <id>P60520</id>
        <label>GABARAPL2</label>
    </interactant>
    <organismsDiffer>false</organismsDiffer>
    <experiments>2</experiments>
</comment>
<comment type="interaction">
    <interactant intactId="EBI-367376">
        <id>Q13043</id>
    </interactant>
    <interactant intactId="EBI-373144">
        <id>Q9GZQ8</id>
        <label>MAP1LC3B</label>
    </interactant>
    <organismsDiffer>false</organismsDiffer>
    <experiments>8</experiments>
</comment>
<comment type="interaction">
    <interactant intactId="EBI-367376">
        <id>Q13043</id>
    </interactant>
    <interactant intactId="EBI-748229">
        <id>Q9H8S9</id>
        <label>MOB1A</label>
    </interactant>
    <organismsDiffer>false</organismsDiffer>
    <experiments>9</experiments>
</comment>
<comment type="interaction">
    <interactant intactId="EBI-367376">
        <id>Q13043</id>
    </interactant>
    <interactant intactId="EBI-2558745">
        <id>Q7L9L4</id>
        <label>MOB1B</label>
    </interactant>
    <organismsDiffer>false</organismsDiffer>
    <experiments>4</experiments>
</comment>
<comment type="interaction">
    <interactant intactId="EBI-367376">
        <id>Q13043</id>
    </interactant>
    <interactant intactId="EBI-353193">
        <id>Q06830</id>
        <label>PRDX1</label>
    </interactant>
    <organismsDiffer>false</organismsDiffer>
    <experiments>11</experiments>
</comment>
<comment type="interaction">
    <interactant intactId="EBI-367376">
        <id>Q13043</id>
    </interactant>
    <interactant intactId="EBI-438698">
        <id>Q9NS23-2</id>
        <label>RASSF1</label>
    </interactant>
    <organismsDiffer>false</organismsDiffer>
    <experiments>4</experiments>
</comment>
<comment type="interaction">
    <interactant intactId="EBI-367376">
        <id>Q13043</id>
    </interactant>
    <interactant intactId="EBI-960081">
        <id>P50749</id>
        <label>RASSF2</label>
    </interactant>
    <organismsDiffer>false</organismsDiffer>
    <experiments>19</experiments>
</comment>
<comment type="interaction">
    <interactant intactId="EBI-367376">
        <id>Q13043</id>
    </interactant>
    <interactant intactId="EBI-2845202">
        <id>Q86WH2</id>
        <label>RASSF3</label>
    </interactant>
    <organismsDiffer>false</organismsDiffer>
    <experiments>7</experiments>
</comment>
<comment type="interaction">
    <interactant intactId="EBI-367376">
        <id>Q13043</id>
    </interactant>
    <interactant intactId="EBI-2933362">
        <id>Q9H2L5</id>
        <label>RASSF4</label>
    </interactant>
    <organismsDiffer>false</organismsDiffer>
    <experiments>7</experiments>
</comment>
<comment type="interaction">
    <interactant intactId="EBI-367376">
        <id>Q13043</id>
    </interactant>
    <interactant intactId="EBI-367390">
        <id>Q8WWW0</id>
        <label>RASSF5</label>
    </interactant>
    <organismsDiffer>false</organismsDiffer>
    <experiments>9</experiments>
</comment>
<comment type="interaction">
    <interactant intactId="EBI-367376">
        <id>Q13043</id>
    </interactant>
    <interactant intactId="EBI-960502">
        <id>Q8WWW0-2</id>
        <label>RASSF5</label>
    </interactant>
    <organismsDiffer>false</organismsDiffer>
    <experiments>4</experiments>
</comment>
<comment type="interaction">
    <interactant intactId="EBI-367376">
        <id>Q13043</id>
    </interactant>
    <interactant intactId="EBI-960507">
        <id>Q8WWW0-3</id>
        <label>RASSF5</label>
    </interactant>
    <organismsDiffer>false</organismsDiffer>
    <experiments>2</experiments>
</comment>
<comment type="interaction">
    <interactant intactId="EBI-367376">
        <id>Q13043</id>
    </interactant>
    <interactant intactId="EBI-2933412">
        <id>Q6ZTQ3</id>
        <label>RASSF6</label>
    </interactant>
    <organismsDiffer>false</organismsDiffer>
    <experiments>6</experiments>
</comment>
<comment type="interaction">
    <interactant intactId="EBI-367376">
        <id>Q13043</id>
    </interactant>
    <interactant intactId="EBI-1017775">
        <id>Q9H4B6</id>
        <label>SAV1</label>
    </interactant>
    <organismsDiffer>false</organismsDiffer>
    <experiments>22</experiments>
</comment>
<comment type="interaction">
    <interactant intactId="EBI-367376">
        <id>Q13043</id>
    </interactant>
    <interactant intactId="EBI-1043216">
        <id>Q14BN4</id>
        <label>SLMAP</label>
    </interactant>
    <organismsDiffer>false</organismsDiffer>
    <experiments>8</experiments>
</comment>
<comment type="interaction">
    <interactant intactId="EBI-367376">
        <id>Q13043</id>
    </interactant>
    <interactant intactId="EBI-992580">
        <id>Q13188</id>
        <label>STK3</label>
    </interactant>
    <organismsDiffer>false</organismsDiffer>
    <experiments>20</experiments>
</comment>
<comment type="interaction">
    <interactant intactId="EBI-367376">
        <id>Q13043</id>
    </interactant>
    <interactant intactId="EBI-367376">
        <id>Q13043</id>
        <label>STK4</label>
    </interactant>
    <organismsDiffer>false</organismsDiffer>
    <experiments>4</experiments>
</comment>
<comment type="interaction">
    <interactant intactId="EBI-367376">
        <id>Q13043</id>
    </interactant>
    <interactant intactId="EBI-444948">
        <id>P35700</id>
        <label>Prdx1</label>
    </interactant>
    <organismsDiffer>true</organismsDiffer>
    <experiments>3</experiments>
</comment>
<comment type="interaction">
    <interactant intactId="EBI-367376">
        <id>Q13043</id>
    </interactant>
    <interactant intactId="EBI-2527046">
        <id>Q91VJ4</id>
        <label>Stk38</label>
    </interactant>
    <organismsDiffer>true</organismsDiffer>
    <experiments>2</experiments>
</comment>
<comment type="interaction">
    <interactant intactId="EBI-15638366">
        <id>Q13043-1</id>
    </interactant>
    <interactant intactId="EBI-960496">
        <id>Q8WWW0-1</id>
        <label>RASSF5</label>
    </interactant>
    <organismsDiffer>false</organismsDiffer>
    <experiments>3</experiments>
</comment>
<comment type="interaction">
    <interactant intactId="EBI-15638366">
        <id>Q13043-1</id>
    </interactant>
    <interactant intactId="EBI-1017775">
        <id>Q9H4B6</id>
        <label>SAV1</label>
    </interactant>
    <organismsDiffer>false</organismsDiffer>
    <experiments>2</experiments>
</comment>
<comment type="interaction">
    <interactant intactId="EBI-15638366">
        <id>Q13043-1</id>
    </interactant>
    <interactant intactId="EBI-15638366">
        <id>Q13043-1</id>
        <label>STK4</label>
    </interactant>
    <organismsDiffer>false</organismsDiffer>
    <experiments>4</experiments>
</comment>
<comment type="interaction">
    <interactant intactId="EBI-14280485">
        <id>Q13043-2</id>
    </interactant>
    <interactant intactId="EBI-742054">
        <id>Q96D03</id>
        <label>DDIT4L</label>
    </interactant>
    <organismsDiffer>false</organismsDiffer>
    <experiments>3</experiments>
</comment>
<comment type="interaction">
    <interactant intactId="EBI-14280485">
        <id>Q13043-2</id>
    </interactant>
    <interactant intactId="EBI-79165">
        <id>Q9NRD5</id>
        <label>PICK1</label>
    </interactant>
    <organismsDiffer>false</organismsDiffer>
    <experiments>3</experiments>
</comment>
<comment type="subcellular location">
    <subcellularLocation>
        <location>Cytoplasm</location>
    </subcellularLocation>
    <subcellularLocation>
        <location>Nucleus</location>
    </subcellularLocation>
    <text>The caspase-cleaved form cycles between the nucleus and cytoplasm.</text>
</comment>
<comment type="alternative products">
    <event type="alternative splicing"/>
    <isoform>
        <id>Q13043-1</id>
        <name>1</name>
        <sequence type="displayed"/>
    </isoform>
    <isoform>
        <id>Q13043-2</id>
        <name>2</name>
        <sequence type="described" ref="VSP_019851 VSP_019852"/>
    </isoform>
</comment>
<comment type="tissue specificity">
    <text evidence="16">Expressed in prostate cancer and levels increase from the normal to the malignant state (at protein level). Ubiquitously expressed.</text>
</comment>
<comment type="induction">
    <text>Activity increases during mitosis.</text>
</comment>
<comment type="PTM">
    <text evidence="7 10 13 15">Autophosphorylated on serine and threonine residues. Phosphorylation at Thr-387 by PKB/AKT1, leads to inhibition of its: kinase activity, nuclear translocation and autophosphorylation at Thr-183. It also diminishes its cleavage by caspases and its ability to phosphorylate FOXO3.</text>
</comment>
<comment type="PTM">
    <text evidence="7">Proteolytically cleaved by caspase-3 during apoptosis at Asp-326 and Asp-349 resulting in a 37 kDa or a 39 kDa subunit respectively. The 39 kDa subunit is further cleaved into the 37 kDa form. Proteolytic cleavage results in kinase activation and nuclear translocation of the truncated form (MST1/N). It is less likely that cleavage at Asp-349 is a prerequisite for activation as this site is not conserved in the murine ortholog.</text>
</comment>
<comment type="disease" evidence="25">
    <disease id="DI-03600">
        <name>Immunodeficiency 110 with lymphoproliferation</name>
        <acronym>IMD110</acronym>
        <description>An autosomal recessive, primary T-cell immunodeficiency syndrome characterized by progressive loss of naive T-cells, recurrent bacterial, viral, and fungal infections, warts, and abscesses, autoimmune manifestations, and cardiac malformations, including atrial septal defect. Patients are at risk for developing lymphoproliferative disorders or lymphoma.</description>
        <dbReference type="MIM" id="614868"/>
    </disease>
    <text>The disease is caused by variants affecting the gene represented in this entry.</text>
</comment>
<comment type="similarity">
    <text evidence="34">Belongs to the protein kinase superfamily. STE Ser/Thr protein kinase family. STE20 subfamily.</text>
</comment>
<comment type="caution">
    <text evidence="20 35">Was originally thought to be phosphorylated at Thr-120 (PubMed:19940129). However, this work has been retracted (PubMed:27825096).</text>
</comment>
<comment type="sequence caution" evidence="34">
    <conflict type="miscellaneous discrepancy">
        <sequence resource="EMBL-CDS" id="AAH29511"/>
    </conflict>
    <text>Contaminating sequence. Potential poly-A sequence.</text>
</comment>
<comment type="sequence caution" evidence="34">
    <conflict type="miscellaneous discrepancy">
        <sequence resource="EMBL-CDS" id="AAH58916"/>
    </conflict>
    <text>Contaminating sequence. Potential poly-A sequence.</text>
</comment>
<comment type="online information" name="Atlas of Genetics and Cytogenetics in Oncology and Haematology">
    <link uri="https://atlasgeneticsoncology.org/gene/42440/STK4"/>
</comment>
<proteinExistence type="evidence at protein level"/>
<name>STK4_HUMAN</name>
<evidence type="ECO:0000250" key="1">
    <source>
        <dbReference type="UniProtKB" id="Q13188"/>
    </source>
</evidence>
<evidence type="ECO:0000250" key="2">
    <source>
        <dbReference type="UniProtKB" id="Q9JI11"/>
    </source>
</evidence>
<evidence type="ECO:0000255" key="3"/>
<evidence type="ECO:0000255" key="4">
    <source>
        <dbReference type="PROSITE-ProRule" id="PRU00159"/>
    </source>
</evidence>
<evidence type="ECO:0000255" key="5">
    <source>
        <dbReference type="PROSITE-ProRule" id="PRU00310"/>
    </source>
</evidence>
<evidence type="ECO:0000256" key="6">
    <source>
        <dbReference type="SAM" id="MobiDB-lite"/>
    </source>
</evidence>
<evidence type="ECO:0000269" key="7">
    <source>
    </source>
</evidence>
<evidence type="ECO:0000269" key="8">
    <source>
    </source>
</evidence>
<evidence type="ECO:0000269" key="9">
    <source>
    </source>
</evidence>
<evidence type="ECO:0000269" key="10">
    <source>
    </source>
</evidence>
<evidence type="ECO:0000269" key="11">
    <source>
    </source>
</evidence>
<evidence type="ECO:0000269" key="12">
    <source>
    </source>
</evidence>
<evidence type="ECO:0000269" key="13">
    <source>
    </source>
</evidence>
<evidence type="ECO:0000269" key="14">
    <source>
    </source>
</evidence>
<evidence type="ECO:0000269" key="15">
    <source>
    </source>
</evidence>
<evidence type="ECO:0000269" key="16">
    <source>
    </source>
</evidence>
<evidence type="ECO:0000269" key="17">
    <source>
    </source>
</evidence>
<evidence type="ECO:0000269" key="18">
    <source>
    </source>
</evidence>
<evidence type="ECO:0000269" key="19">
    <source>
    </source>
</evidence>
<evidence type="ECO:0000269" key="20">
    <source>
    </source>
</evidence>
<evidence type="ECO:0000269" key="21">
    <source>
    </source>
</evidence>
<evidence type="ECO:0000269" key="22">
    <source>
    </source>
</evidence>
<evidence type="ECO:0000269" key="23">
    <source>
    </source>
</evidence>
<evidence type="ECO:0000269" key="24">
    <source>
    </source>
</evidence>
<evidence type="ECO:0000269" key="25">
    <source>
    </source>
</evidence>
<evidence type="ECO:0000269" key="26">
    <source>
    </source>
</evidence>
<evidence type="ECO:0000269" key="27">
    <source>
    </source>
</evidence>
<evidence type="ECO:0000269" key="28">
    <source>
    </source>
</evidence>
<evidence type="ECO:0000269" key="29">
    <source>
    </source>
</evidence>
<evidence type="ECO:0000269" key="30">
    <source>
    </source>
</evidence>
<evidence type="ECO:0000269" key="31">
    <source ref="7"/>
</evidence>
<evidence type="ECO:0000303" key="32">
    <source>
    </source>
</evidence>
<evidence type="ECO:0000303" key="33">
    <source>
    </source>
</evidence>
<evidence type="ECO:0000305" key="34"/>
<evidence type="ECO:0000305" key="35">
    <source>
    </source>
</evidence>
<evidence type="ECO:0000312" key="36">
    <source>
        <dbReference type="HGNC" id="HGNC:11408"/>
    </source>
</evidence>
<evidence type="ECO:0007744" key="37">
    <source>
    </source>
</evidence>
<evidence type="ECO:0007744" key="38">
    <source>
    </source>
</evidence>
<evidence type="ECO:0007744" key="39">
    <source>
    </source>
</evidence>
<evidence type="ECO:0007744" key="40">
    <source>
    </source>
</evidence>
<evidence type="ECO:0007744" key="41">
    <source>
    </source>
</evidence>
<evidence type="ECO:0007744" key="42">
    <source>
    </source>
</evidence>
<evidence type="ECO:0007744" key="43">
    <source>
    </source>
</evidence>
<evidence type="ECO:0007744" key="44">
    <source>
    </source>
</evidence>
<evidence type="ECO:0007744" key="45">
    <source>
    </source>
</evidence>
<evidence type="ECO:0007744" key="46">
    <source>
    </source>
</evidence>
<evidence type="ECO:0007829" key="47">
    <source>
        <dbReference type="PDB" id="4NR2"/>
    </source>
</evidence>
<evidence type="ECO:0007829" key="48">
    <source>
        <dbReference type="PDB" id="8A5J"/>
    </source>
</evidence>
<evidence type="ECO:0007829" key="49">
    <source>
        <dbReference type="PDB" id="8PAV"/>
    </source>
</evidence>
<keyword id="KW-0002">3D-structure</keyword>
<keyword id="KW-0007">Acetylation</keyword>
<keyword id="KW-0025">Alternative splicing</keyword>
<keyword id="KW-0053">Apoptosis</keyword>
<keyword id="KW-0067">ATP-binding</keyword>
<keyword id="KW-0175">Coiled coil</keyword>
<keyword id="KW-0963">Cytoplasm</keyword>
<keyword id="KW-0903">Direct protein sequencing</keyword>
<keyword id="KW-0418">Kinase</keyword>
<keyword id="KW-0460">Magnesium</keyword>
<keyword id="KW-0479">Metal-binding</keyword>
<keyword id="KW-0547">Nucleotide-binding</keyword>
<keyword id="KW-0539">Nucleus</keyword>
<keyword id="KW-0597">Phosphoprotein</keyword>
<keyword id="KW-1267">Proteomics identification</keyword>
<keyword id="KW-1185">Reference proteome</keyword>
<keyword id="KW-0723">Serine/threonine-protein kinase</keyword>
<keyword id="KW-0808">Transferase</keyword>
<organism>
    <name type="scientific">Homo sapiens</name>
    <name type="common">Human</name>
    <dbReference type="NCBI Taxonomy" id="9606"/>
    <lineage>
        <taxon>Eukaryota</taxon>
        <taxon>Metazoa</taxon>
        <taxon>Chordata</taxon>
        <taxon>Craniata</taxon>
        <taxon>Vertebrata</taxon>
        <taxon>Euteleostomi</taxon>
        <taxon>Mammalia</taxon>
        <taxon>Eutheria</taxon>
        <taxon>Euarchontoglires</taxon>
        <taxon>Primates</taxon>
        <taxon>Haplorrhini</taxon>
        <taxon>Catarrhini</taxon>
        <taxon>Hominidae</taxon>
        <taxon>Homo</taxon>
    </lineage>
</organism>